<keyword id="KW-0002">3D-structure</keyword>
<keyword id="KW-0025">Alternative splicing</keyword>
<keyword id="KW-0903">Direct protein sequencing</keyword>
<keyword id="KW-0256">Endoplasmic reticulum</keyword>
<keyword id="KW-0349">Heme</keyword>
<keyword id="KW-0408">Iron</keyword>
<keyword id="KW-0443">Lipid metabolism</keyword>
<keyword id="KW-0472">Membrane</keyword>
<keyword id="KW-0479">Metal-binding</keyword>
<keyword id="KW-0492">Microsome</keyword>
<keyword id="KW-0503">Monooxygenase</keyword>
<keyword id="KW-0560">Oxidoreductase</keyword>
<keyword id="KW-1267">Proteomics identification</keyword>
<keyword id="KW-1185">Reference proteome</keyword>
<keyword id="KW-0753">Steroid metabolism</keyword>
<keyword id="KW-1207">Sterol metabolism</keyword>
<name>CP2C9_HUMAN</name>
<protein>
    <recommendedName>
        <fullName evidence="30">Cytochrome P450 2C9</fullName>
        <ecNumber evidence="5 11 23 24">1.14.14.1</ecNumber>
    </recommendedName>
    <alternativeName>
        <fullName>(R)-limonene 6-monooxygenase</fullName>
        <ecNumber evidence="4">1.14.14.53</ecNumber>
    </alternativeName>
    <alternativeName>
        <fullName>(S)-limonene 6-monooxygenase</fullName>
        <ecNumber evidence="4">1.14.14.51</ecNumber>
    </alternativeName>
    <alternativeName>
        <fullName>(S)-limonene 7-monooxygenase</fullName>
        <ecNumber evidence="4">1.14.14.52</ecNumber>
    </alternativeName>
    <alternativeName>
        <fullName>CYPIIC9</fullName>
    </alternativeName>
    <alternativeName>
        <fullName evidence="28">Cholesterol 25-hydroxylase</fullName>
    </alternativeName>
    <alternativeName>
        <fullName>Cytochrome P-450MP</fullName>
    </alternativeName>
    <alternativeName>
        <fullName>Cytochrome P450 MP-4</fullName>
    </alternativeName>
    <alternativeName>
        <fullName>Cytochrome P450 MP-8</fullName>
    </alternativeName>
    <alternativeName>
        <fullName>Cytochrome P450 PB-1</fullName>
    </alternativeName>
    <alternativeName>
        <fullName evidence="28">S-mephenytoin 4-hydroxylase</fullName>
    </alternativeName>
</protein>
<reference key="1">
    <citation type="journal article" date="1988" name="Am. J. Hum. Genet.">
        <title>Human cytochrome P-450 PB-1: a multigene family involved in mephenytoin and steroid oxidations that maps to chromosome 10.</title>
        <authorList>
            <person name="Meehan R.R."/>
            <person name="Gosden J.R."/>
            <person name="Rout D."/>
            <person name="Hastie N.D."/>
            <person name="Friedberg T."/>
            <person name="Adesnik M."/>
            <person name="Buckland R."/>
            <person name="van Heyningen V."/>
            <person name="Fletcher J.M."/>
            <person name="Spurr N.K."/>
            <person name="Sweeney J."/>
            <person name="Wolf C.R."/>
        </authorList>
    </citation>
    <scope>NUCLEOTIDE SEQUENCE [MRNA] (ISOFORM 1)</scope>
    <scope>VARIANT CYS-144</scope>
</reference>
<reference key="2">
    <citation type="journal article" date="1987" name="Nucleic Acids Res.">
        <title>cDNA and amino acid sequences of two members of the human P450IIC gene subfamily.</title>
        <authorList>
            <person name="Kimura S."/>
            <person name="Pastewka J."/>
            <person name="Gelboin H.V."/>
            <person name="Gonzalez F.J."/>
        </authorList>
    </citation>
    <scope>NUCLEOTIDE SEQUENCE [MRNA] (ISOFORM 1)</scope>
    <scope>VARIANT CYS-144</scope>
</reference>
<reference key="3">
    <citation type="submission" date="2003-07" db="EMBL/GenBank/DDBJ databases">
        <authorList>
            <consortium name="NIEHS SNPs program"/>
        </authorList>
    </citation>
    <scope>NUCLEOTIDE SEQUENCE [GENOMIC DNA]</scope>
    <scope>VARIANTS CYS-144; HIS-150; ARG-251; GLY-272; LEU-359 AND SER-489</scope>
</reference>
<reference key="4">
    <citation type="journal article" date="2004" name="Nat. Genet.">
        <title>Complete sequencing and characterization of 21,243 full-length human cDNAs.</title>
        <authorList>
            <person name="Ota T."/>
            <person name="Suzuki Y."/>
            <person name="Nishikawa T."/>
            <person name="Otsuki T."/>
            <person name="Sugiyama T."/>
            <person name="Irie R."/>
            <person name="Wakamatsu A."/>
            <person name="Hayashi K."/>
            <person name="Sato H."/>
            <person name="Nagai K."/>
            <person name="Kimura K."/>
            <person name="Makita H."/>
            <person name="Sekine M."/>
            <person name="Obayashi M."/>
            <person name="Nishi T."/>
            <person name="Shibahara T."/>
            <person name="Tanaka T."/>
            <person name="Ishii S."/>
            <person name="Yamamoto J."/>
            <person name="Saito K."/>
            <person name="Kawai Y."/>
            <person name="Isono Y."/>
            <person name="Nakamura Y."/>
            <person name="Nagahari K."/>
            <person name="Murakami K."/>
            <person name="Yasuda T."/>
            <person name="Iwayanagi T."/>
            <person name="Wagatsuma M."/>
            <person name="Shiratori A."/>
            <person name="Sudo H."/>
            <person name="Hosoiri T."/>
            <person name="Kaku Y."/>
            <person name="Kodaira H."/>
            <person name="Kondo H."/>
            <person name="Sugawara M."/>
            <person name="Takahashi M."/>
            <person name="Kanda K."/>
            <person name="Yokoi T."/>
            <person name="Furuya T."/>
            <person name="Kikkawa E."/>
            <person name="Omura Y."/>
            <person name="Abe K."/>
            <person name="Kamihara K."/>
            <person name="Katsuta N."/>
            <person name="Sato K."/>
            <person name="Tanikawa M."/>
            <person name="Yamazaki M."/>
            <person name="Ninomiya K."/>
            <person name="Ishibashi T."/>
            <person name="Yamashita H."/>
            <person name="Murakawa K."/>
            <person name="Fujimori K."/>
            <person name="Tanai H."/>
            <person name="Kimata M."/>
            <person name="Watanabe M."/>
            <person name="Hiraoka S."/>
            <person name="Chiba Y."/>
            <person name="Ishida S."/>
            <person name="Ono Y."/>
            <person name="Takiguchi S."/>
            <person name="Watanabe S."/>
            <person name="Yosida M."/>
            <person name="Hotuta T."/>
            <person name="Kusano J."/>
            <person name="Kanehori K."/>
            <person name="Takahashi-Fujii A."/>
            <person name="Hara H."/>
            <person name="Tanase T.-O."/>
            <person name="Nomura Y."/>
            <person name="Togiya S."/>
            <person name="Komai F."/>
            <person name="Hara R."/>
            <person name="Takeuchi K."/>
            <person name="Arita M."/>
            <person name="Imose N."/>
            <person name="Musashino K."/>
            <person name="Yuuki H."/>
            <person name="Oshima A."/>
            <person name="Sasaki N."/>
            <person name="Aotsuka S."/>
            <person name="Yoshikawa Y."/>
            <person name="Matsunawa H."/>
            <person name="Ichihara T."/>
            <person name="Shiohata N."/>
            <person name="Sano S."/>
            <person name="Moriya S."/>
            <person name="Momiyama H."/>
            <person name="Satoh N."/>
            <person name="Takami S."/>
            <person name="Terashima Y."/>
            <person name="Suzuki O."/>
            <person name="Nakagawa S."/>
            <person name="Senoh A."/>
            <person name="Mizoguchi H."/>
            <person name="Goto Y."/>
            <person name="Shimizu F."/>
            <person name="Wakebe H."/>
            <person name="Hishigaki H."/>
            <person name="Watanabe T."/>
            <person name="Sugiyama A."/>
            <person name="Takemoto M."/>
            <person name="Kawakami B."/>
            <person name="Yamazaki M."/>
            <person name="Watanabe K."/>
            <person name="Kumagai A."/>
            <person name="Itakura S."/>
            <person name="Fukuzumi Y."/>
            <person name="Fujimori Y."/>
            <person name="Komiyama M."/>
            <person name="Tashiro H."/>
            <person name="Tanigami A."/>
            <person name="Fujiwara T."/>
            <person name="Ono T."/>
            <person name="Yamada K."/>
            <person name="Fujii Y."/>
            <person name="Ozaki K."/>
            <person name="Hirao M."/>
            <person name="Ohmori Y."/>
            <person name="Kawabata A."/>
            <person name="Hikiji T."/>
            <person name="Kobatake N."/>
            <person name="Inagaki H."/>
            <person name="Ikema Y."/>
            <person name="Okamoto S."/>
            <person name="Okitani R."/>
            <person name="Kawakami T."/>
            <person name="Noguchi S."/>
            <person name="Itoh T."/>
            <person name="Shigeta K."/>
            <person name="Senba T."/>
            <person name="Matsumura K."/>
            <person name="Nakajima Y."/>
            <person name="Mizuno T."/>
            <person name="Morinaga M."/>
            <person name="Sasaki M."/>
            <person name="Togashi T."/>
            <person name="Oyama M."/>
            <person name="Hata H."/>
            <person name="Watanabe M."/>
            <person name="Komatsu T."/>
            <person name="Mizushima-Sugano J."/>
            <person name="Satoh T."/>
            <person name="Shirai Y."/>
            <person name="Takahashi Y."/>
            <person name="Nakagawa K."/>
            <person name="Okumura K."/>
            <person name="Nagase T."/>
            <person name="Nomura N."/>
            <person name="Kikuchi H."/>
            <person name="Masuho Y."/>
            <person name="Yamashita R."/>
            <person name="Nakai K."/>
            <person name="Yada T."/>
            <person name="Nakamura Y."/>
            <person name="Ohara O."/>
            <person name="Isogai T."/>
            <person name="Sugano S."/>
        </authorList>
    </citation>
    <scope>NUCLEOTIDE SEQUENCE [LARGE SCALE MRNA] (ISOFORM 1)</scope>
    <source>
        <tissue>Mammary gland</tissue>
    </source>
</reference>
<reference key="5">
    <citation type="journal article" date="2004" name="Nature">
        <title>The DNA sequence and comparative analysis of human chromosome 10.</title>
        <authorList>
            <person name="Deloukas P."/>
            <person name="Earthrowl M.E."/>
            <person name="Grafham D.V."/>
            <person name="Rubenfield M."/>
            <person name="French L."/>
            <person name="Steward C.A."/>
            <person name="Sims S.K."/>
            <person name="Jones M.C."/>
            <person name="Searle S."/>
            <person name="Scott C."/>
            <person name="Howe K."/>
            <person name="Hunt S.E."/>
            <person name="Andrews T.D."/>
            <person name="Gilbert J.G.R."/>
            <person name="Swarbreck D."/>
            <person name="Ashurst J.L."/>
            <person name="Taylor A."/>
            <person name="Battles J."/>
            <person name="Bird C.P."/>
            <person name="Ainscough R."/>
            <person name="Almeida J.P."/>
            <person name="Ashwell R.I.S."/>
            <person name="Ambrose K.D."/>
            <person name="Babbage A.K."/>
            <person name="Bagguley C.L."/>
            <person name="Bailey J."/>
            <person name="Banerjee R."/>
            <person name="Bates K."/>
            <person name="Beasley H."/>
            <person name="Bray-Allen S."/>
            <person name="Brown A.J."/>
            <person name="Brown J.Y."/>
            <person name="Burford D.C."/>
            <person name="Burrill W."/>
            <person name="Burton J."/>
            <person name="Cahill P."/>
            <person name="Camire D."/>
            <person name="Carter N.P."/>
            <person name="Chapman J.C."/>
            <person name="Clark S.Y."/>
            <person name="Clarke G."/>
            <person name="Clee C.M."/>
            <person name="Clegg S."/>
            <person name="Corby N."/>
            <person name="Coulson A."/>
            <person name="Dhami P."/>
            <person name="Dutta I."/>
            <person name="Dunn M."/>
            <person name="Faulkner L."/>
            <person name="Frankish A."/>
            <person name="Frankland J.A."/>
            <person name="Garner P."/>
            <person name="Garnett J."/>
            <person name="Gribble S."/>
            <person name="Griffiths C."/>
            <person name="Grocock R."/>
            <person name="Gustafson E."/>
            <person name="Hammond S."/>
            <person name="Harley J.L."/>
            <person name="Hart E."/>
            <person name="Heath P.D."/>
            <person name="Ho T.P."/>
            <person name="Hopkins B."/>
            <person name="Horne J."/>
            <person name="Howden P.J."/>
            <person name="Huckle E."/>
            <person name="Hynds C."/>
            <person name="Johnson C."/>
            <person name="Johnson D."/>
            <person name="Kana A."/>
            <person name="Kay M."/>
            <person name="Kimberley A.M."/>
            <person name="Kershaw J.K."/>
            <person name="Kokkinaki M."/>
            <person name="Laird G.K."/>
            <person name="Lawlor S."/>
            <person name="Lee H.M."/>
            <person name="Leongamornlert D.A."/>
            <person name="Laird G."/>
            <person name="Lloyd C."/>
            <person name="Lloyd D.M."/>
            <person name="Loveland J."/>
            <person name="Lovell J."/>
            <person name="McLaren S."/>
            <person name="McLay K.E."/>
            <person name="McMurray A."/>
            <person name="Mashreghi-Mohammadi M."/>
            <person name="Matthews L."/>
            <person name="Milne S."/>
            <person name="Nickerson T."/>
            <person name="Nguyen M."/>
            <person name="Overton-Larty E."/>
            <person name="Palmer S.A."/>
            <person name="Pearce A.V."/>
            <person name="Peck A.I."/>
            <person name="Pelan S."/>
            <person name="Phillimore B."/>
            <person name="Porter K."/>
            <person name="Rice C.M."/>
            <person name="Rogosin A."/>
            <person name="Ross M.T."/>
            <person name="Sarafidou T."/>
            <person name="Sehra H.K."/>
            <person name="Shownkeen R."/>
            <person name="Skuce C.D."/>
            <person name="Smith M."/>
            <person name="Standring L."/>
            <person name="Sycamore N."/>
            <person name="Tester J."/>
            <person name="Thorpe A."/>
            <person name="Torcasso W."/>
            <person name="Tracey A."/>
            <person name="Tromans A."/>
            <person name="Tsolas J."/>
            <person name="Wall M."/>
            <person name="Walsh J."/>
            <person name="Wang H."/>
            <person name="Weinstock K."/>
            <person name="West A.P."/>
            <person name="Willey D.L."/>
            <person name="Whitehead S.L."/>
            <person name="Wilming L."/>
            <person name="Wray P.W."/>
            <person name="Young L."/>
            <person name="Chen Y."/>
            <person name="Lovering R.C."/>
            <person name="Moschonas N.K."/>
            <person name="Siebert R."/>
            <person name="Fechtel K."/>
            <person name="Bentley D."/>
            <person name="Durbin R.M."/>
            <person name="Hubbard T."/>
            <person name="Doucette-Stamm L."/>
            <person name="Beck S."/>
            <person name="Smith D.R."/>
            <person name="Rogers J."/>
        </authorList>
    </citation>
    <scope>NUCLEOTIDE SEQUENCE [LARGE SCALE GENOMIC DNA]</scope>
</reference>
<reference key="6">
    <citation type="submission" date="2005-09" db="EMBL/GenBank/DDBJ databases">
        <authorList>
            <person name="Mural R.J."/>
            <person name="Istrail S."/>
            <person name="Sutton G."/>
            <person name="Florea L."/>
            <person name="Halpern A.L."/>
            <person name="Mobarry C.M."/>
            <person name="Lippert R."/>
            <person name="Walenz B."/>
            <person name="Shatkay H."/>
            <person name="Dew I."/>
            <person name="Miller J.R."/>
            <person name="Flanigan M.J."/>
            <person name="Edwards N.J."/>
            <person name="Bolanos R."/>
            <person name="Fasulo D."/>
            <person name="Halldorsson B.V."/>
            <person name="Hannenhalli S."/>
            <person name="Turner R."/>
            <person name="Yooseph S."/>
            <person name="Lu F."/>
            <person name="Nusskern D.R."/>
            <person name="Shue B.C."/>
            <person name="Zheng X.H."/>
            <person name="Zhong F."/>
            <person name="Delcher A.L."/>
            <person name="Huson D.H."/>
            <person name="Kravitz S.A."/>
            <person name="Mouchard L."/>
            <person name="Reinert K."/>
            <person name="Remington K.A."/>
            <person name="Clark A.G."/>
            <person name="Waterman M.S."/>
            <person name="Eichler E.E."/>
            <person name="Adams M.D."/>
            <person name="Hunkapiller M.W."/>
            <person name="Myers E.W."/>
            <person name="Venter J.C."/>
        </authorList>
    </citation>
    <scope>NUCLEOTIDE SEQUENCE [LARGE SCALE GENOMIC DNA]</scope>
</reference>
<reference key="7">
    <citation type="journal article" date="2004" name="Genome Res.">
        <title>The status, quality, and expansion of the NIH full-length cDNA project: the Mammalian Gene Collection (MGC).</title>
        <authorList>
            <consortium name="The MGC Project Team"/>
        </authorList>
    </citation>
    <scope>NUCLEOTIDE SEQUENCE [LARGE SCALE MRNA] (ISOFORMS 1 AND 2)</scope>
    <scope>VARIANT CYS-144</scope>
    <source>
        <tissue>Liver</tissue>
    </source>
</reference>
<reference key="8">
    <citation type="journal article" date="1987" name="J. Biochem.">
        <title>Nucleotide sequence of a human liver cytochrome P-450 related to the rat male specific form.</title>
        <authorList>
            <person name="Yasumori T."/>
            <person name="Kawano S."/>
            <person name="Nagata K."/>
            <person name="Shimada M."/>
            <person name="Yamazoe Y."/>
            <person name="Kato R."/>
        </authorList>
    </citation>
    <scope>NUCLEOTIDE SEQUENCE [MRNA] OF 4-490 (ISOFORM 1)</scope>
    <source>
        <tissue>Liver</tissue>
    </source>
</reference>
<reference key="9">
    <citation type="journal article" date="1987" name="Biochemistry">
        <title>Cloning and sequence determination of a complementary DNA related to human liver microsomal cytochrome P-450 S-mephenytoin 4-hydroxylase.</title>
        <authorList>
            <person name="Umbenhauer D.R."/>
            <person name="Martin M.V."/>
            <person name="Lloyd R.S."/>
            <person name="Guengerich F.P."/>
        </authorList>
    </citation>
    <scope>NUCLEOTIDE SEQUENCE [MRNA] OF 6-490 (ISOFORM 1)</scope>
    <scope>VARIANTS CYS-358 AND ASP-417</scope>
    <source>
        <tissue>Liver</tissue>
    </source>
</reference>
<reference key="10">
    <citation type="journal article" date="1988" name="Biochemistry">
        <title>Characterization of cDNAs, mRNAs, and proteins related to human liver microsomal cytochrome P-450 (S)-mephenytoin 4'-hydroxylase.</title>
        <authorList>
            <person name="Ged C."/>
            <person name="Umbenhauer D.R."/>
            <person name="Bellew T.M."/>
            <person name="Bork R.W."/>
            <person name="Srivastava P.K."/>
            <person name="Shinriki N."/>
            <person name="Lloyd R.S."/>
            <person name="Guengerich F.P."/>
        </authorList>
    </citation>
    <scope>NUCLEOTIDE SEQUENCE [MRNA] OF 6-490 (ISOFORM 1)</scope>
    <scope>VARIANTS CYS-358 AND ASP-417</scope>
</reference>
<reference key="11">
    <citation type="journal article" date="1992" name="Biochem. Int.">
        <title>Six-base deletion occurring in messages of human cytochrome P-450 in the CYP2C subfamily results in reduction of tolbutamide hydroxylase activity.</title>
        <authorList>
            <person name="Ohgiya S."/>
            <person name="Komori M."/>
            <person name="Ohi H."/>
            <person name="Shiramatsu K."/>
            <person name="Shinriki N."/>
            <person name="Kamataki T."/>
        </authorList>
    </citation>
    <scope>NUCLEOTIDE SEQUENCE [MRNA] OF 14-490 (ISOFORM 1)</scope>
</reference>
<reference key="12">
    <citation type="journal article" date="1986" name="J. Biol. Chem.">
        <title>Human liver microsomal cytochrome P-450 mephenytoin 4-hydroxylase, a prototype of genetic polymorphism in oxidative drug metabolism. Purification and characterization of two similar forms involved in the reaction.</title>
        <authorList>
            <person name="Shimada T."/>
            <person name="Misono K.S."/>
            <person name="Guengerich F.P."/>
        </authorList>
    </citation>
    <scope>PROTEIN SEQUENCE OF 1-29</scope>
    <scope>CATALYTIC ACTIVITY</scope>
    <scope>BIOPHYSICOCHEMICAL PROPERTIES</scope>
    <scope>CHARACTERIZATION</scope>
</reference>
<reference key="13">
    <citation type="journal article" date="1988" name="J. Biochem.">
        <title>Cytochrome P-450 in human liver microsomes: high-performance liquid chromatographic isolation of three forms and their characterization.</title>
        <authorList>
            <person name="Komori M."/>
            <person name="Hashizume T."/>
            <person name="Ohi H."/>
            <person name="Miura T."/>
            <person name="Kitada M."/>
            <person name="Nagashima K."/>
            <person name="Kamataki T."/>
        </authorList>
    </citation>
    <scope>PROTEIN SEQUENCE OF 1-25</scope>
    <scope>CATALYTIC ACTIVITY</scope>
</reference>
<reference key="14">
    <citation type="journal article" date="1991" name="Mol. Pharmacol.">
        <title>Separation of human liver microsomal tolbutamide hydroxylase and (S)-mephenytoin 4'-hydroxylase cytochrome P-450 enzymes.</title>
        <authorList>
            <person name="Srivastava P.K."/>
            <person name="Yun C.H."/>
            <person name="Beaune P.H."/>
            <person name="Ged C."/>
            <person name="Guengerich F.P."/>
        </authorList>
    </citation>
    <scope>PARTIAL PROTEIN SEQUENCE</scope>
</reference>
<reference key="15">
    <citation type="journal article" date="1996" name="Arch. Biochem. Biophys.">
        <title>Allelic variants of human cytochrome P450 2C9: baculovirus-mediated expression, purification, structural characterization, substrate stereoselectivity, and prochiral selectivity of the wild-type and I359L mutant forms.</title>
        <authorList>
            <person name="Haining R.L."/>
            <person name="Hunter A.P."/>
            <person name="Veronese M.E."/>
            <person name="Trager W.F."/>
            <person name="Rettie A.E."/>
        </authorList>
    </citation>
    <scope>PROTEIN SEQUENCE OF 1-9; 21-157; 169-249; 264-424; 426-476 AND 484-487</scope>
</reference>
<reference key="16">
    <citation type="journal article" date="1993" name="Arch. Biochem. Biophys.">
        <title>Expression of modified cytochrome P450 2C10 (2C9) in Escherichia coli, purification, and reconstitution of catalytic activity.</title>
        <authorList>
            <person name="Sandhu P."/>
            <person name="Baba T."/>
            <person name="Guengerich F.P."/>
        </authorList>
    </citation>
    <scope>PROTEIN SEQUENCE OF 1-20</scope>
</reference>
<reference key="17">
    <citation type="journal article" date="1995" name="Arch. Biochem. Biophys.">
        <title>Molecular cloning, expression and characterization of an endogenous human cytochrome P450 arachidonic acid epoxygenase isoform.</title>
        <authorList>
            <person name="Zeldin D.C."/>
            <person name="DuBois R.N."/>
            <person name="Falck J.R."/>
            <person name="Capdevila J.H."/>
        </authorList>
    </citation>
    <scope>FUNCTION</scope>
    <scope>CATALYTIC ACTIVITY</scope>
    <scope>PATHWAY</scope>
    <source>
        <tissue>Kidney</tissue>
    </source>
</reference>
<reference key="18">
    <citation type="journal article" date="1998" name="Anal. Biochem.">
        <title>Analysis of cytochrome P450 metabolites of arachidonic and linoleic acids by liquid chromatography-mass spectrometry with ion trap MS.</title>
        <authorList>
            <person name="Bylund J."/>
            <person name="Ericsson J."/>
            <person name="Oliw E.H."/>
        </authorList>
    </citation>
    <scope>FUNCTION</scope>
    <scope>CATALYTIC ACTIVITY</scope>
</reference>
<reference key="19">
    <citation type="journal article" date="1998" name="J. Pharmacol. Exp. Ther.">
        <title>Cytochromes P450 with bisallylic hydroxylation activity on arachidonic and linoleic acids studied with human recombinant enzymes and with human and rat liver microsomes.</title>
        <authorList>
            <person name="Bylund J."/>
            <person name="Kunz T."/>
            <person name="Valmsen K."/>
            <person name="Oliw E.H."/>
        </authorList>
    </citation>
    <scope>FUNCTION</scope>
    <scope>CATALYTIC ACTIVITY</scope>
    <scope>PATHWAY</scope>
</reference>
<reference key="20">
    <citation type="journal article" date="2002" name="Drug Metab. Dispos.">
        <title>Metabolism of (+)- and (-)-limonenes to respective carveols and perillyl alcohols by CYP2C9 and CYP2C19 in human liver microsomes.</title>
        <authorList>
            <person name="Miyazawa M."/>
            <person name="Shindo M."/>
            <person name="Shimada T."/>
        </authorList>
    </citation>
    <scope>FUNCTION</scope>
    <scope>CATALYTIC ACTIVITY</scope>
    <scope>PATHWAY</scope>
</reference>
<reference key="21">
    <citation type="journal article" date="2003" name="Endocrinology">
        <title>Characterization of the oxidative metabolites of 17beta-estradiol and estrone formed by 15 selectively expressed human cytochrome p450 isoforms.</title>
        <authorList>
            <person name="Lee A.J."/>
            <person name="Cai M.X."/>
            <person name="Thomas P.E."/>
            <person name="Conney A.H."/>
            <person name="Zhu B.T."/>
        </authorList>
    </citation>
    <scope>FUNCTION</scope>
    <scope>CATALYTIC ACTIVITY</scope>
</reference>
<reference key="22">
    <citation type="journal article" date="2005" name="Biochem. Biophys. Res. Commun.">
        <title>Eicosapentaenoic acid metabolism by cytochrome P450 enzymes of the CYP2C subfamily.</title>
        <authorList>
            <person name="Barbosa-Sicard E."/>
            <person name="Markovic M."/>
            <person name="Honeck H."/>
            <person name="Christ B."/>
            <person name="Muller D.N."/>
            <person name="Schunck W.H."/>
        </authorList>
    </citation>
    <scope>FUNCTION</scope>
    <scope>CATALYTIC ACTIVITY</scope>
    <scope>BIOPHYSICOCHEMICAL PROPERTIES</scope>
    <scope>PATHWAY</scope>
</reference>
<reference key="23">
    <citation type="journal article" date="2010" name="J. Lipid Res.">
        <title>Stereoselective epoxidation of the last double bond of polyunsaturated fatty acids by human cytochromes P450.</title>
        <authorList>
            <person name="Lucas D."/>
            <person name="Goulitquer S."/>
            <person name="Marienhagen J."/>
            <person name="Fer M."/>
            <person name="Dreano Y."/>
            <person name="Schwaneberg U."/>
            <person name="Amet Y."/>
            <person name="Corcos L."/>
        </authorList>
    </citation>
    <scope>FUNCTION</scope>
    <scope>CATALYTIC ACTIVITY</scope>
    <scope>PATHWAY</scope>
</reference>
<reference key="24">
    <citation type="journal article" date="2011" name="J. Lipid Res.">
        <title>Cholesterol 25-hydroxylation activity of CYP3A.</title>
        <authorList>
            <person name="Honda A."/>
            <person name="Miyazaki T."/>
            <person name="Ikegami T."/>
            <person name="Iwamoto J."/>
            <person name="Maeda T."/>
            <person name="Hirayama T."/>
            <person name="Saito Y."/>
            <person name="Teramoto T."/>
            <person name="Matsuzaki Y."/>
        </authorList>
    </citation>
    <scope>FUNCTION</scope>
    <scope>CATALYTIC ACTIVITY</scope>
    <scope>SUBCELLULAR LOCATION</scope>
    <scope>PATHWAY</scope>
</reference>
<reference key="25">
    <citation type="journal article" date="2014" name="J. Proteomics">
        <title>An enzyme assisted RP-RPLC approach for in-depth analysis of human liver phosphoproteome.</title>
        <authorList>
            <person name="Bian Y."/>
            <person name="Song C."/>
            <person name="Cheng K."/>
            <person name="Dong M."/>
            <person name="Wang F."/>
            <person name="Huang J."/>
            <person name="Sun D."/>
            <person name="Wang L."/>
            <person name="Ye M."/>
            <person name="Zou H."/>
        </authorList>
    </citation>
    <scope>IDENTIFICATION BY MASS SPECTROMETRY [LARGE SCALE ANALYSIS]</scope>
    <source>
        <tissue>Liver</tissue>
    </source>
</reference>
<reference key="26">
    <citation type="journal article" date="2003" name="Nature">
        <title>Crystal structure of human cytochrome P450 2C9 with bound warfarin.</title>
        <authorList>
            <person name="Williams P.A."/>
            <person name="Cosme J."/>
            <person name="Ward A."/>
            <person name="Angove H.C."/>
            <person name="Matak-Vinkovic D."/>
            <person name="Jhoti H."/>
        </authorList>
    </citation>
    <scope>X-RAY CRYSTALLOGRAPHY (2.55 ANGSTROMS) OF 30-490</scope>
</reference>
<reference key="27">
    <citation type="journal article" date="1996" name="Pharmacogenetics">
        <title>Genetic analysis of the human cytochrome P450 CYP2C9 locus.</title>
        <authorList>
            <person name="Stubbins M.J."/>
            <person name="Harries L.W."/>
            <person name="Smith G."/>
            <person name="Tarbit M.H."/>
            <person name="Wolf C.R."/>
        </authorList>
    </citation>
    <scope>VARIANTS CYS-144 AND LEU-359</scope>
</reference>
<reference key="28">
    <citation type="journal article" date="1997" name="Pharmacogenetics">
        <title>Allelic and functional variability of cytochrome P4502C9.</title>
        <authorList>
            <person name="Bhasker C.R."/>
            <person name="Miners J.O."/>
            <person name="Coulter S."/>
            <person name="Birkett D.J."/>
        </authorList>
    </citation>
    <scope>VARIANTS CYS-144; CYS-358; LEU-359 AND ASP-417</scope>
</reference>
<reference key="29">
    <citation type="journal article" date="2000" name="Pharmacogenetics">
        <title>Polymorphism of the cytochrome P450 (CYP) 2C9 gene in Japanese epileptic patients: genetic analysis of the CYP2C9 locus.</title>
        <authorList>
            <person name="Imai J."/>
            <person name="Ieiri I."/>
            <person name="Mamiya K."/>
            <person name="Miyahara S."/>
            <person name="Furuumi H."/>
            <person name="Nanba E."/>
            <person name="Yamane M."/>
            <person name="Fukumaki Y."/>
            <person name="Ninomiya H."/>
            <person name="Tashiro N."/>
            <person name="Otsubo K."/>
            <person name="Higuchi S."/>
        </authorList>
    </citation>
    <scope>VARIANT THR-359</scope>
</reference>
<reference key="30">
    <citation type="journal article" date="2001" name="Mol. Pharmacol.">
        <title>Identification and functional characterization of a new CYP2C9 variant (CYP2C9*5) expressed among African Americans.</title>
        <authorList>
            <person name="Dickmann L.J."/>
            <person name="Rettie A.E."/>
            <person name="Kneller M.B."/>
            <person name="Kim R.B."/>
            <person name="Wood A.J."/>
            <person name="Stein C.M."/>
            <person name="Wilkinson G.R."/>
            <person name="Schwarz U.I."/>
        </authorList>
    </citation>
    <scope>VARIANT GLU-360</scope>
</reference>
<reference key="31">
    <citation type="journal article" date="2002" name="JAMA">
        <title>Association between CYP2C9 genetic variants and anticoagulation-related outcomes during warfarin therapy.</title>
        <authorList>
            <person name="Higashi M.K."/>
            <person name="Veenstra D.L."/>
            <person name="Kondo L.M."/>
            <person name="Wittkowsky A.K."/>
            <person name="Srinouanprachanh S.L."/>
            <person name="Farin F.M."/>
            <person name="Rettie A.E."/>
        </authorList>
    </citation>
    <scope>VARIANT TRP-335</scope>
</reference>
<reference key="32">
    <citation type="journal article" date="2004" name="Pharmacogenomics">
        <title>Genetic variation in eleven phase I drug metabolism genes in an ethnically diverse population.</title>
        <authorList>
            <person name="Solus J.F."/>
            <person name="Arietta B.J."/>
            <person name="Harris J.R."/>
            <person name="Sexton D.P."/>
            <person name="Steward J.Q."/>
            <person name="McMunn C."/>
            <person name="Ihrie P."/>
            <person name="Mehall J.M."/>
            <person name="Edwards T.L."/>
            <person name="Dawson E.P."/>
        </authorList>
    </citation>
    <scope>VARIANTS CYS-144; HIS-150; ARG-251; TRP-335; LEU-359; GLU-360 AND PRO-413</scope>
</reference>
<reference key="33">
    <citation type="journal article" date="2011" name="Pharmacogenet. Genomics">
        <title>Characterization of a novel CYP2C9 gene mutation and structural bioinformatic protein analysis in a warfarin hypersensitive patient.</title>
        <authorList>
            <person name="Ciccacci C."/>
            <person name="Falconi M."/>
            <person name="Paolillo N."/>
            <person name="Oteri F."/>
            <person name="Forte V."/>
            <person name="Novelli G."/>
            <person name="Desideri A."/>
            <person name="Borgiani P."/>
        </authorList>
    </citation>
    <scope>VARIANT LEU-125</scope>
</reference>
<reference key="34">
    <citation type="journal article" date="2013" name="Thromb. Res.">
        <title>Implication of novel CYP2C9*57 (p.Asn204His) variant in coumarin hypersensitivity.</title>
        <authorList>
            <person name="Nahar R."/>
            <person name="Dube D."/>
            <person name="Parakh R."/>
            <person name="Deb R."/>
            <person name="Saxena R."/>
            <person name="Singh T.P."/>
            <person name="Verma I.C."/>
        </authorList>
    </citation>
    <scope>VARIANT HIS-204</scope>
</reference>
<reference key="35">
    <citation type="journal article" date="2014" name="Pharmacogenomics">
        <title>Warfarin dose requirements in a patient with the CYP2C9*14 allele.</title>
        <authorList>
            <person name="Lee Y.M."/>
            <person name="Eggen J."/>
            <person name="Soni V."/>
            <person name="Drozda K."/>
            <person name="Nutescu E.A."/>
            <person name="Cavallari L.H."/>
        </authorList>
    </citation>
    <scope>VARIANT HIS-125</scope>
</reference>
<reference key="36">
    <citation type="journal article" date="2015" name="Drug Metab. Dispos.">
        <title>Identification and Functional Assessment of a New CYP2C9 Allelic Variant CYP2C9*59.</title>
        <authorList>
            <person name="Dai D.P."/>
            <person name="Wang S.H."/>
            <person name="Li C.B."/>
            <person name="Geng P.W."/>
            <person name="Cai J."/>
            <person name="Wang H."/>
            <person name="Hu G.X."/>
            <person name="Cai J.P."/>
        </authorList>
    </citation>
    <scope>VARIANT PHE-434</scope>
    <scope>CHARACTERIZATION OF VARIANT PHE-434</scope>
    <scope>BIOPHYSICOCHEMICAL PROPERTIES</scope>
    <scope>FUNCTION</scope>
</reference>
<comment type="function">
    <text evidence="4 5 8 9 11 14 20 23 24">A cytochrome P450 monooxygenase involved in the metabolism of various endogenous substrates, including fatty acids and steroids (PubMed:12865317, PubMed:15766564, PubMed:19965576, PubMed:21576599, PubMed:7574697, PubMed:9435160, PubMed:9866708). Mechanistically, uses molecular oxygen inserting one oxygen atom into a substrate, and reducing the second into a water molecule, with two electrons provided by NADPH via cytochrome P450 reductase (NADPH--hemoprotein reductase) (PubMed:12865317, PubMed:15766564, PubMed:19965576, PubMed:21576599, PubMed:7574697, PubMed:9435160, PubMed:9866708). Catalyzes the epoxidation of double bonds of polyunsaturated fatty acids (PUFA) (PubMed:15766564, PubMed:19965576, PubMed:7574697, PubMed:9866708). Catalyzes the hydroxylation of carbon-hydrogen bonds. Metabolizes cholesterol toward 25-hydroxycholesterol, a physiological regulator of cellular cholesterol homeostasis (PubMed:21576599). Exhibits low catalytic activity for the formation of catechol estrogens from 17beta-estradiol (E2) and estrone (E1), namely 2-hydroxy E1 and E2 (PubMed:12865317). Catalyzes bisallylic hydroxylation and hydroxylation with double-bond migration of polyunsaturated fatty acids (PUFA) (PubMed:9435160, PubMed:9866708). Also metabolizes plant monoterpenes such as limonene. Oxygenates (R)- and (S)-limonene to produce carveol and perillyl alcohol (PubMed:11950794). Contributes to the wide pharmacokinetics variability of the metabolism of drugs such as S-warfarin, diclofenac, phenytoin, tolbutamide and losartan (PubMed:25994031).</text>
</comment>
<comment type="catalytic activity">
    <reaction evidence="5 11 23 24">
        <text>an organic molecule + reduced [NADPH--hemoprotein reductase] + O2 = an alcohol + oxidized [NADPH--hemoprotein reductase] + H2O + H(+)</text>
        <dbReference type="Rhea" id="RHEA:17149"/>
        <dbReference type="Rhea" id="RHEA-COMP:11964"/>
        <dbReference type="Rhea" id="RHEA-COMP:11965"/>
        <dbReference type="ChEBI" id="CHEBI:15377"/>
        <dbReference type="ChEBI" id="CHEBI:15378"/>
        <dbReference type="ChEBI" id="CHEBI:15379"/>
        <dbReference type="ChEBI" id="CHEBI:30879"/>
        <dbReference type="ChEBI" id="CHEBI:57618"/>
        <dbReference type="ChEBI" id="CHEBI:58210"/>
        <dbReference type="ChEBI" id="CHEBI:142491"/>
        <dbReference type="EC" id="1.14.14.1"/>
    </reaction>
    <physiologicalReaction direction="left-to-right" evidence="32 35 37 38">
        <dbReference type="Rhea" id="RHEA:17150"/>
    </physiologicalReaction>
</comment>
<comment type="catalytic activity">
    <reaction evidence="20">
        <text>(5Z,8Z,11Z,14Z)-eicosatetraenoate + reduced [NADPH--hemoprotein reductase] + O2 = (8R,9S)-epoxy-(5Z,11Z,14Z)-eicosatrienoate + oxidized [NADPH--hemoprotein reductase] + H2O + H(+)</text>
        <dbReference type="Rhea" id="RHEA:49884"/>
        <dbReference type="Rhea" id="RHEA-COMP:11964"/>
        <dbReference type="Rhea" id="RHEA-COMP:11965"/>
        <dbReference type="ChEBI" id="CHEBI:15377"/>
        <dbReference type="ChEBI" id="CHEBI:15378"/>
        <dbReference type="ChEBI" id="CHEBI:15379"/>
        <dbReference type="ChEBI" id="CHEBI:32395"/>
        <dbReference type="ChEBI" id="CHEBI:57618"/>
        <dbReference type="ChEBI" id="CHEBI:58210"/>
        <dbReference type="ChEBI" id="CHEBI:131975"/>
    </reaction>
    <physiologicalReaction direction="left-to-right" evidence="36">
        <dbReference type="Rhea" id="RHEA:49885"/>
    </physiologicalReaction>
</comment>
<comment type="catalytic activity">
    <reaction evidence="20">
        <text>(5Z,8Z,11Z,14Z)-eicosatetraenoate + reduced [NADPH--hemoprotein reductase] + O2 = (8S,9R)-epoxy-(5Z,11Z,14Z)-eicosatrienoate + oxidized [NADPH--hemoprotein reductase] + H2O + H(+)</text>
        <dbReference type="Rhea" id="RHEA:49928"/>
        <dbReference type="Rhea" id="RHEA-COMP:11964"/>
        <dbReference type="Rhea" id="RHEA-COMP:11965"/>
        <dbReference type="ChEBI" id="CHEBI:15377"/>
        <dbReference type="ChEBI" id="CHEBI:15378"/>
        <dbReference type="ChEBI" id="CHEBI:15379"/>
        <dbReference type="ChEBI" id="CHEBI:32395"/>
        <dbReference type="ChEBI" id="CHEBI:57618"/>
        <dbReference type="ChEBI" id="CHEBI:58210"/>
        <dbReference type="ChEBI" id="CHEBI:131974"/>
    </reaction>
    <physiologicalReaction direction="left-to-right" evidence="36">
        <dbReference type="Rhea" id="RHEA:49929"/>
    </physiologicalReaction>
</comment>
<comment type="catalytic activity">
    <reaction evidence="20">
        <text>(5Z,8Z,11Z,14Z)-eicosatetraenoate + reduced [NADPH--hemoprotein reductase] + O2 = (11R,12S)-epoxy-(5Z,8Z,14Z)-eicosatrienoate + oxidized [NADPH--hemoprotein reductase] + H2O + H(+)</text>
        <dbReference type="Rhea" id="RHEA:49880"/>
        <dbReference type="Rhea" id="RHEA-COMP:11964"/>
        <dbReference type="Rhea" id="RHEA-COMP:11965"/>
        <dbReference type="ChEBI" id="CHEBI:15377"/>
        <dbReference type="ChEBI" id="CHEBI:15378"/>
        <dbReference type="ChEBI" id="CHEBI:15379"/>
        <dbReference type="ChEBI" id="CHEBI:32395"/>
        <dbReference type="ChEBI" id="CHEBI:57618"/>
        <dbReference type="ChEBI" id="CHEBI:58210"/>
        <dbReference type="ChEBI" id="CHEBI:131970"/>
    </reaction>
    <physiologicalReaction direction="left-to-right" evidence="36">
        <dbReference type="Rhea" id="RHEA:49881"/>
    </physiologicalReaction>
</comment>
<comment type="catalytic activity">
    <reaction evidence="20">
        <text>(5Z,8Z,11Z,14Z)-eicosatetraenoate + reduced [NADPH--hemoprotein reductase] + O2 = (11S,12R)-epoxy-(5Z,8Z,14Z)-eicosatrienoate + oxidized [NADPH--hemoprotein reductase] + H2O + H(+)</text>
        <dbReference type="Rhea" id="RHEA:49876"/>
        <dbReference type="Rhea" id="RHEA-COMP:11964"/>
        <dbReference type="Rhea" id="RHEA-COMP:11965"/>
        <dbReference type="ChEBI" id="CHEBI:15377"/>
        <dbReference type="ChEBI" id="CHEBI:15378"/>
        <dbReference type="ChEBI" id="CHEBI:15379"/>
        <dbReference type="ChEBI" id="CHEBI:32395"/>
        <dbReference type="ChEBI" id="CHEBI:57618"/>
        <dbReference type="ChEBI" id="CHEBI:58210"/>
        <dbReference type="ChEBI" id="CHEBI:131969"/>
    </reaction>
    <physiologicalReaction direction="left-to-right" evidence="36">
        <dbReference type="Rhea" id="RHEA:49877"/>
    </physiologicalReaction>
</comment>
<comment type="catalytic activity">
    <reaction evidence="9 20">
        <text>(5Z,8Z,11Z,14Z)-eicosatetraenoate + reduced [NADPH--hemoprotein reductase] + O2 = (14R,15S)-epoxy-(5Z,8Z,11Z)-eicosatrienoate + oxidized [NADPH--hemoprotein reductase] + H2O + H(+)</text>
        <dbReference type="Rhea" id="RHEA:49860"/>
        <dbReference type="Rhea" id="RHEA-COMP:11964"/>
        <dbReference type="Rhea" id="RHEA-COMP:11965"/>
        <dbReference type="ChEBI" id="CHEBI:15377"/>
        <dbReference type="ChEBI" id="CHEBI:15378"/>
        <dbReference type="ChEBI" id="CHEBI:15379"/>
        <dbReference type="ChEBI" id="CHEBI:32395"/>
        <dbReference type="ChEBI" id="CHEBI:57618"/>
        <dbReference type="ChEBI" id="CHEBI:58210"/>
        <dbReference type="ChEBI" id="CHEBI:131965"/>
    </reaction>
    <physiologicalReaction direction="left-to-right" evidence="34 36">
        <dbReference type="Rhea" id="RHEA:49861"/>
    </physiologicalReaction>
</comment>
<comment type="catalytic activity">
    <reaction evidence="9 20">
        <text>(5Z,8Z,11Z,14Z)-eicosatetraenoate + reduced [NADPH--hemoprotein reductase] + O2 = (14S,15R)-epoxy-(5Z,8Z,11Z)-eicosatrienoate + oxidized [NADPH--hemoprotein reductase] + H2O + H(+)</text>
        <dbReference type="Rhea" id="RHEA:49856"/>
        <dbReference type="Rhea" id="RHEA-COMP:11964"/>
        <dbReference type="Rhea" id="RHEA-COMP:11965"/>
        <dbReference type="ChEBI" id="CHEBI:15377"/>
        <dbReference type="ChEBI" id="CHEBI:15378"/>
        <dbReference type="ChEBI" id="CHEBI:15379"/>
        <dbReference type="ChEBI" id="CHEBI:32395"/>
        <dbReference type="ChEBI" id="CHEBI:57618"/>
        <dbReference type="ChEBI" id="CHEBI:58210"/>
        <dbReference type="ChEBI" id="CHEBI:131964"/>
    </reaction>
    <physiologicalReaction direction="left-to-right" evidence="34 36">
        <dbReference type="Rhea" id="RHEA:49857"/>
    </physiologicalReaction>
</comment>
<comment type="catalytic activity">
    <reaction evidence="8">
        <text>(5Z,8Z,11Z,14Z,17Z)-eicosapentaenoate + reduced [NADPH--hemoprotein reductase] + O2 = 8,9-epoxy-(5Z,11Z,14Z,17Z)-eicosatetraenoate + oxidized [NADPH--hemoprotein reductase] + H2O + H(+)</text>
        <dbReference type="Rhea" id="RHEA:52168"/>
        <dbReference type="Rhea" id="RHEA-COMP:11964"/>
        <dbReference type="Rhea" id="RHEA-COMP:11965"/>
        <dbReference type="ChEBI" id="CHEBI:15377"/>
        <dbReference type="ChEBI" id="CHEBI:15378"/>
        <dbReference type="ChEBI" id="CHEBI:15379"/>
        <dbReference type="ChEBI" id="CHEBI:57618"/>
        <dbReference type="ChEBI" id="CHEBI:58210"/>
        <dbReference type="ChEBI" id="CHEBI:58562"/>
        <dbReference type="ChEBI" id="CHEBI:136439"/>
    </reaction>
    <physiologicalReaction direction="left-to-right" evidence="33">
        <dbReference type="Rhea" id="RHEA:52169"/>
    </physiologicalReaction>
</comment>
<comment type="catalytic activity">
    <reaction evidence="8">
        <text>(5Z,8Z,11Z,14Z,17Z)-eicosapentaenoate + reduced [NADPH--hemoprotein reductase] + O2 = 11,12-epoxy-(5Z,8Z,14Z,17Z)-eicosatetraenoate + oxidized [NADPH--hemoprotein reductase] + H2O + H(+)</text>
        <dbReference type="Rhea" id="RHEA:52172"/>
        <dbReference type="Rhea" id="RHEA-COMP:11964"/>
        <dbReference type="Rhea" id="RHEA-COMP:11965"/>
        <dbReference type="ChEBI" id="CHEBI:15377"/>
        <dbReference type="ChEBI" id="CHEBI:15378"/>
        <dbReference type="ChEBI" id="CHEBI:15379"/>
        <dbReference type="ChEBI" id="CHEBI:57618"/>
        <dbReference type="ChEBI" id="CHEBI:58210"/>
        <dbReference type="ChEBI" id="CHEBI:58562"/>
        <dbReference type="ChEBI" id="CHEBI:136441"/>
    </reaction>
    <physiologicalReaction direction="left-to-right" evidence="33">
        <dbReference type="Rhea" id="RHEA:52173"/>
    </physiologicalReaction>
</comment>
<comment type="catalytic activity">
    <reaction evidence="8">
        <text>(5Z,8Z,11Z,14Z,17Z)-eicosapentaenoate + reduced [NADPH--hemoprotein reductase] + O2 = 14,15-epoxy-(5Z,8Z,11Z,17Z)-eicosatetraenoate + oxidized [NADPH--hemoprotein reductase] + H2O + H(+)</text>
        <dbReference type="Rhea" id="RHEA:52176"/>
        <dbReference type="Rhea" id="RHEA-COMP:11964"/>
        <dbReference type="Rhea" id="RHEA-COMP:11965"/>
        <dbReference type="ChEBI" id="CHEBI:15377"/>
        <dbReference type="ChEBI" id="CHEBI:15378"/>
        <dbReference type="ChEBI" id="CHEBI:15379"/>
        <dbReference type="ChEBI" id="CHEBI:57618"/>
        <dbReference type="ChEBI" id="CHEBI:58210"/>
        <dbReference type="ChEBI" id="CHEBI:58562"/>
        <dbReference type="ChEBI" id="CHEBI:136443"/>
    </reaction>
    <physiologicalReaction direction="left-to-right" evidence="33">
        <dbReference type="Rhea" id="RHEA:52177"/>
    </physiologicalReaction>
</comment>
<comment type="catalytic activity">
    <reaction evidence="8 9">
        <text>(5Z,8Z,11Z,14Z,17Z)-eicosapentaenoate + reduced [NADPH--hemoprotein reductase] + O2 = (17R,18S)-epoxy-(5Z,8Z,11Z,14Z)-eicosatetraenoate + oxidized [NADPH--hemoprotein reductase] + H2O + H(+)</text>
        <dbReference type="Rhea" id="RHEA:39779"/>
        <dbReference type="Rhea" id="RHEA-COMP:11964"/>
        <dbReference type="Rhea" id="RHEA-COMP:11965"/>
        <dbReference type="ChEBI" id="CHEBI:15377"/>
        <dbReference type="ChEBI" id="CHEBI:15378"/>
        <dbReference type="ChEBI" id="CHEBI:15379"/>
        <dbReference type="ChEBI" id="CHEBI:57618"/>
        <dbReference type="ChEBI" id="CHEBI:58210"/>
        <dbReference type="ChEBI" id="CHEBI:58562"/>
        <dbReference type="ChEBI" id="CHEBI:76634"/>
    </reaction>
    <physiologicalReaction direction="left-to-right" evidence="33 34">
        <dbReference type="Rhea" id="RHEA:39780"/>
    </physiologicalReaction>
</comment>
<comment type="catalytic activity">
    <reaction evidence="11">
        <text>cholesterol + reduced [NADPH--hemoprotein reductase] + O2 = 25-hydroxycholesterol + oxidized [NADPH--hemoprotein reductase] + H2O + H(+)</text>
        <dbReference type="Rhea" id="RHEA:50256"/>
        <dbReference type="Rhea" id="RHEA-COMP:11964"/>
        <dbReference type="Rhea" id="RHEA-COMP:11965"/>
        <dbReference type="ChEBI" id="CHEBI:15377"/>
        <dbReference type="ChEBI" id="CHEBI:15378"/>
        <dbReference type="ChEBI" id="CHEBI:15379"/>
        <dbReference type="ChEBI" id="CHEBI:16113"/>
        <dbReference type="ChEBI" id="CHEBI:42977"/>
        <dbReference type="ChEBI" id="CHEBI:57618"/>
        <dbReference type="ChEBI" id="CHEBI:58210"/>
    </reaction>
    <physiologicalReaction direction="left-to-right" evidence="35">
        <dbReference type="Rhea" id="RHEA:50257"/>
    </physiologicalReaction>
</comment>
<comment type="catalytic activity">
    <reaction evidence="5">
        <text>17beta-estradiol + reduced [NADPH--hemoprotein reductase] + O2 = 2-hydroxy-17beta-estradiol + oxidized [NADPH--hemoprotein reductase] + H2O + H(+)</text>
        <dbReference type="Rhea" id="RHEA:47212"/>
        <dbReference type="Rhea" id="RHEA-COMP:11964"/>
        <dbReference type="Rhea" id="RHEA-COMP:11965"/>
        <dbReference type="ChEBI" id="CHEBI:15377"/>
        <dbReference type="ChEBI" id="CHEBI:15378"/>
        <dbReference type="ChEBI" id="CHEBI:15379"/>
        <dbReference type="ChEBI" id="CHEBI:16469"/>
        <dbReference type="ChEBI" id="CHEBI:28744"/>
        <dbReference type="ChEBI" id="CHEBI:57618"/>
        <dbReference type="ChEBI" id="CHEBI:58210"/>
    </reaction>
    <physiologicalReaction direction="left-to-right" evidence="32">
        <dbReference type="Rhea" id="RHEA:47213"/>
    </physiologicalReaction>
</comment>
<comment type="catalytic activity">
    <reaction evidence="5">
        <text>estrone + reduced [NADPH--hemoprotein reductase] + O2 = 2-hydroxyestrone + oxidized [NADPH--hemoprotein reductase] + H2O + H(+)</text>
        <dbReference type="Rhea" id="RHEA:47208"/>
        <dbReference type="Rhea" id="RHEA-COMP:11964"/>
        <dbReference type="Rhea" id="RHEA-COMP:11965"/>
        <dbReference type="ChEBI" id="CHEBI:1156"/>
        <dbReference type="ChEBI" id="CHEBI:15377"/>
        <dbReference type="ChEBI" id="CHEBI:15378"/>
        <dbReference type="ChEBI" id="CHEBI:15379"/>
        <dbReference type="ChEBI" id="CHEBI:17263"/>
        <dbReference type="ChEBI" id="CHEBI:57618"/>
        <dbReference type="ChEBI" id="CHEBI:58210"/>
    </reaction>
    <physiologicalReaction direction="left-to-right" evidence="32">
        <dbReference type="Rhea" id="RHEA:47209"/>
    </physiologicalReaction>
</comment>
<comment type="catalytic activity">
    <reaction evidence="24">
        <text>(5Z,8Z,11Z,14Z)-eicosatetraenoate + reduced [NADPH--hemoprotein reductase] + O2 = (11R)-hydroxy-(5Z,8Z,12E,14Z)-eicosatetraenoate + oxidized [NADPH--hemoprotein reductase] + H2O + H(+)</text>
        <dbReference type="Rhea" id="RHEA:52492"/>
        <dbReference type="Rhea" id="RHEA-COMP:11964"/>
        <dbReference type="Rhea" id="RHEA-COMP:11965"/>
        <dbReference type="ChEBI" id="CHEBI:15377"/>
        <dbReference type="ChEBI" id="CHEBI:15378"/>
        <dbReference type="ChEBI" id="CHEBI:15379"/>
        <dbReference type="ChEBI" id="CHEBI:32395"/>
        <dbReference type="ChEBI" id="CHEBI:57618"/>
        <dbReference type="ChEBI" id="CHEBI:58210"/>
        <dbReference type="ChEBI" id="CHEBI:78836"/>
    </reaction>
    <physiologicalReaction direction="left-to-right" evidence="38">
        <dbReference type="Rhea" id="RHEA:52493"/>
    </physiologicalReaction>
</comment>
<comment type="catalytic activity">
    <reaction evidence="23 24">
        <text>(5Z,8Z,11Z,14Z)-eicosatetraenoate + reduced [NADPH--hemoprotein reductase] + O2 = (12R)-hydroxy-(5Z,8Z,10E,14Z)-eicosatetraenoate + oxidized [NADPH--hemoprotein reductase] + H2O + H(+)</text>
        <dbReference type="Rhea" id="RHEA:52300"/>
        <dbReference type="Rhea" id="RHEA-COMP:11964"/>
        <dbReference type="Rhea" id="RHEA-COMP:11965"/>
        <dbReference type="ChEBI" id="CHEBI:15377"/>
        <dbReference type="ChEBI" id="CHEBI:15378"/>
        <dbReference type="ChEBI" id="CHEBI:15379"/>
        <dbReference type="ChEBI" id="CHEBI:32395"/>
        <dbReference type="ChEBI" id="CHEBI:57618"/>
        <dbReference type="ChEBI" id="CHEBI:58210"/>
        <dbReference type="ChEBI" id="CHEBI:83343"/>
    </reaction>
    <physiologicalReaction direction="left-to-right" evidence="38">
        <dbReference type="Rhea" id="RHEA:52301"/>
    </physiologicalReaction>
</comment>
<comment type="catalytic activity">
    <reaction evidence="24">
        <text>(5Z,8Z,11Z,14Z)-eicosatetraenoate + reduced [NADPH--hemoprotein reductase] + O2 = (15R)-hydroxy-(5Z,8Z,11Z,13E)-eicosatetraenoate + oxidized [NADPH--hemoprotein reductase] + H2O + H(+)</text>
        <dbReference type="Rhea" id="RHEA:52496"/>
        <dbReference type="Rhea" id="RHEA-COMP:11964"/>
        <dbReference type="Rhea" id="RHEA-COMP:11965"/>
        <dbReference type="ChEBI" id="CHEBI:15377"/>
        <dbReference type="ChEBI" id="CHEBI:15378"/>
        <dbReference type="ChEBI" id="CHEBI:15379"/>
        <dbReference type="ChEBI" id="CHEBI:32395"/>
        <dbReference type="ChEBI" id="CHEBI:57618"/>
        <dbReference type="ChEBI" id="CHEBI:58210"/>
        <dbReference type="ChEBI" id="CHEBI:78837"/>
    </reaction>
    <physiologicalReaction direction="left-to-right" evidence="38">
        <dbReference type="Rhea" id="RHEA:52497"/>
    </physiologicalReaction>
</comment>
<comment type="catalytic activity">
    <reaction evidence="24">
        <text>(5Z,8Z,11Z,14Z)-eicosatetraenoate + reduced [NADPH--hemoprotein reductase] + O2 = 10-hydroxy-(5Z,8Z,11Z,14Z)-eicosatetraenoate + oxidized [NADPH--hemoprotein reductase] + H2O + H(+)</text>
        <dbReference type="Rhea" id="RHEA:52296"/>
        <dbReference type="Rhea" id="RHEA-COMP:11964"/>
        <dbReference type="Rhea" id="RHEA-COMP:11965"/>
        <dbReference type="ChEBI" id="CHEBI:15377"/>
        <dbReference type="ChEBI" id="CHEBI:15378"/>
        <dbReference type="ChEBI" id="CHEBI:15379"/>
        <dbReference type="ChEBI" id="CHEBI:32395"/>
        <dbReference type="ChEBI" id="CHEBI:57618"/>
        <dbReference type="ChEBI" id="CHEBI:58210"/>
        <dbReference type="ChEBI" id="CHEBI:133345"/>
    </reaction>
    <physiologicalReaction direction="left-to-right" evidence="38">
        <dbReference type="Rhea" id="RHEA:52297"/>
    </physiologicalReaction>
</comment>
<comment type="catalytic activity">
    <reaction evidence="24">
        <text>(9Z,12Z)-octadecadienoate + reduced [NADPH--hemoprotein reductase] + O2 = (13R)-hydroxy-(9Z,11E)-octadecadienoate + oxidized [NADPH--hemoprotein reductase] + H2O + H(+)</text>
        <dbReference type="Rhea" id="RHEA:52500"/>
        <dbReference type="Rhea" id="RHEA-COMP:11964"/>
        <dbReference type="Rhea" id="RHEA-COMP:11965"/>
        <dbReference type="ChEBI" id="CHEBI:15377"/>
        <dbReference type="ChEBI" id="CHEBI:15378"/>
        <dbReference type="ChEBI" id="CHEBI:15379"/>
        <dbReference type="ChEBI" id="CHEBI:30245"/>
        <dbReference type="ChEBI" id="CHEBI:57618"/>
        <dbReference type="ChEBI" id="CHEBI:58210"/>
        <dbReference type="ChEBI" id="CHEBI:136655"/>
    </reaction>
    <physiologicalReaction direction="left-to-right" evidence="38">
        <dbReference type="Rhea" id="RHEA:52501"/>
    </physiologicalReaction>
</comment>
<comment type="catalytic activity">
    <reaction evidence="24">
        <text>(9Z,12Z)-octadecadienoate + reduced [NADPH--hemoprotein reductase] + O2 = (9R)-hydroxy-(10E,12Z)-octadecadienoate + oxidized [NADPH--hemoprotein reductase] + H2O + H(+)</text>
        <dbReference type="Rhea" id="RHEA:52504"/>
        <dbReference type="Rhea" id="RHEA-COMP:11964"/>
        <dbReference type="Rhea" id="RHEA-COMP:11965"/>
        <dbReference type="ChEBI" id="CHEBI:15377"/>
        <dbReference type="ChEBI" id="CHEBI:15378"/>
        <dbReference type="ChEBI" id="CHEBI:15379"/>
        <dbReference type="ChEBI" id="CHEBI:30245"/>
        <dbReference type="ChEBI" id="CHEBI:57618"/>
        <dbReference type="ChEBI" id="CHEBI:58210"/>
        <dbReference type="ChEBI" id="CHEBI:77895"/>
    </reaction>
    <physiologicalReaction direction="left-to-right" evidence="38">
        <dbReference type="Rhea" id="RHEA:52505"/>
    </physiologicalReaction>
</comment>
<comment type="catalytic activity">
    <reaction evidence="23 24">
        <text>(5Z,8Z,11Z,14Z)-eicosatetraenoate + reduced [NADPH--hemoprotein reductase] + O2 = 19-hydroxy-(5Z,8Z,11Z,14Z)-eicosatetraenoate + oxidized [NADPH--hemoprotein reductase] + H2O + H(+)</text>
        <dbReference type="Rhea" id="RHEA:39759"/>
        <dbReference type="Rhea" id="RHEA-COMP:11964"/>
        <dbReference type="Rhea" id="RHEA-COMP:11965"/>
        <dbReference type="ChEBI" id="CHEBI:15377"/>
        <dbReference type="ChEBI" id="CHEBI:15378"/>
        <dbReference type="ChEBI" id="CHEBI:15379"/>
        <dbReference type="ChEBI" id="CHEBI:32395"/>
        <dbReference type="ChEBI" id="CHEBI:57618"/>
        <dbReference type="ChEBI" id="CHEBI:58210"/>
        <dbReference type="ChEBI" id="CHEBI:76627"/>
    </reaction>
    <physiologicalReaction direction="left-to-right" evidence="38">
        <dbReference type="Rhea" id="RHEA:39760"/>
    </physiologicalReaction>
</comment>
<comment type="catalytic activity">
    <reaction evidence="24">
        <text>(5Z,8Z,11Z,14Z)-eicosatetraenoate + reduced [NADPH--hemoprotein reductase] + O2 = 13(S)-hydroxy-(5Z,8Z,11Z,14Z)-eicosatetraenoate + oxidized [NADPH--hemoprotein reductase] + H2O + H(+)</text>
        <dbReference type="Rhea" id="RHEA:52508"/>
        <dbReference type="Rhea" id="RHEA-COMP:11964"/>
        <dbReference type="Rhea" id="RHEA-COMP:11965"/>
        <dbReference type="ChEBI" id="CHEBI:15377"/>
        <dbReference type="ChEBI" id="CHEBI:15378"/>
        <dbReference type="ChEBI" id="CHEBI:15379"/>
        <dbReference type="ChEBI" id="CHEBI:32395"/>
        <dbReference type="ChEBI" id="CHEBI:57618"/>
        <dbReference type="ChEBI" id="CHEBI:58210"/>
        <dbReference type="ChEBI" id="CHEBI:136654"/>
    </reaction>
    <physiologicalReaction direction="left-to-right" evidence="38">
        <dbReference type="Rhea" id="RHEA:52509"/>
    </physiologicalReaction>
</comment>
<comment type="catalytic activity">
    <reaction evidence="24">
        <text>(5Z,8Z,11Z,14Z)-eicosatetraenoate + reduced [NADPH--hemoprotein reductase] + O2 = 14,15-epoxy-(5Z,8Z,11Z)-eicosatrienoate + oxidized [NADPH--hemoprotein reductase] + H2O + H(+)</text>
        <dbReference type="Rhea" id="RHEA:51472"/>
        <dbReference type="Rhea" id="RHEA-COMP:11964"/>
        <dbReference type="Rhea" id="RHEA-COMP:11965"/>
        <dbReference type="ChEBI" id="CHEBI:15377"/>
        <dbReference type="ChEBI" id="CHEBI:15378"/>
        <dbReference type="ChEBI" id="CHEBI:15379"/>
        <dbReference type="ChEBI" id="CHEBI:32395"/>
        <dbReference type="ChEBI" id="CHEBI:57618"/>
        <dbReference type="ChEBI" id="CHEBI:58210"/>
        <dbReference type="ChEBI" id="CHEBI:84024"/>
    </reaction>
    <physiologicalReaction direction="left-to-right" evidence="38">
        <dbReference type="Rhea" id="RHEA:51473"/>
    </physiologicalReaction>
</comment>
<comment type="catalytic activity">
    <reaction evidence="24">
        <text>(5Z,8Z,11Z,14Z)-eicosatetraenoate + reduced [NADPH--hemoprotein reductase] + O2 = 11,12-epoxy-(5Z,8Z,14Z)-eicosatrienoate + oxidized [NADPH--hemoprotein reductase] + H2O + H(+)</text>
        <dbReference type="Rhea" id="RHEA:51480"/>
        <dbReference type="Rhea" id="RHEA-COMP:11964"/>
        <dbReference type="Rhea" id="RHEA-COMP:11965"/>
        <dbReference type="ChEBI" id="CHEBI:15377"/>
        <dbReference type="ChEBI" id="CHEBI:15378"/>
        <dbReference type="ChEBI" id="CHEBI:15379"/>
        <dbReference type="ChEBI" id="CHEBI:32395"/>
        <dbReference type="ChEBI" id="CHEBI:57618"/>
        <dbReference type="ChEBI" id="CHEBI:58210"/>
        <dbReference type="ChEBI" id="CHEBI:76625"/>
    </reaction>
    <physiologicalReaction direction="left-to-right" evidence="38">
        <dbReference type="Rhea" id="RHEA:51481"/>
    </physiologicalReaction>
</comment>
<comment type="catalytic activity">
    <reaction evidence="23">
        <text>(5Z,8Z,11Z,14Z)-eicosatetraenoate + reduced [NADPH--hemoprotein reductase] + O2 = 13-hydroxy-(5Z,8Z,11Z,14Z)-eicosatetraenoate + oxidized [NADPH--hemoprotein reductase] + H2O + H(+)</text>
        <dbReference type="Rhea" id="RHEA:52292"/>
        <dbReference type="Rhea" id="RHEA-COMP:11964"/>
        <dbReference type="Rhea" id="RHEA-COMP:11965"/>
        <dbReference type="ChEBI" id="CHEBI:15377"/>
        <dbReference type="ChEBI" id="CHEBI:15378"/>
        <dbReference type="ChEBI" id="CHEBI:15379"/>
        <dbReference type="ChEBI" id="CHEBI:32395"/>
        <dbReference type="ChEBI" id="CHEBI:57618"/>
        <dbReference type="ChEBI" id="CHEBI:58210"/>
        <dbReference type="ChEBI" id="CHEBI:136524"/>
    </reaction>
    <physiologicalReaction direction="left-to-right" evidence="37">
        <dbReference type="Rhea" id="RHEA:52293"/>
    </physiologicalReaction>
</comment>
<comment type="catalytic activity">
    <reaction evidence="4">
        <text>(4R)-limonene + reduced [NADPH--hemoprotein reductase] + O2 = (1R,5S)-carveol + oxidized [NADPH--hemoprotein reductase] + H2O + H(+)</text>
        <dbReference type="Rhea" id="RHEA:18957"/>
        <dbReference type="Rhea" id="RHEA-COMP:11964"/>
        <dbReference type="Rhea" id="RHEA-COMP:11965"/>
        <dbReference type="ChEBI" id="CHEBI:15377"/>
        <dbReference type="ChEBI" id="CHEBI:15378"/>
        <dbReference type="ChEBI" id="CHEBI:15379"/>
        <dbReference type="ChEBI" id="CHEBI:15382"/>
        <dbReference type="ChEBI" id="CHEBI:15388"/>
        <dbReference type="ChEBI" id="CHEBI:57618"/>
        <dbReference type="ChEBI" id="CHEBI:58210"/>
        <dbReference type="EC" id="1.14.14.53"/>
    </reaction>
</comment>
<comment type="catalytic activity">
    <reaction evidence="4">
        <text>(4S)-limonene + reduced [NADPH--hemoprotein reductase] + O2 = (1S,5R)-carveol + oxidized [NADPH--hemoprotein reductase] + H2O + H(+)</text>
        <dbReference type="Rhea" id="RHEA:17945"/>
        <dbReference type="Rhea" id="RHEA-COMP:11964"/>
        <dbReference type="Rhea" id="RHEA-COMP:11965"/>
        <dbReference type="ChEBI" id="CHEBI:15377"/>
        <dbReference type="ChEBI" id="CHEBI:15378"/>
        <dbReference type="ChEBI" id="CHEBI:15379"/>
        <dbReference type="ChEBI" id="CHEBI:15383"/>
        <dbReference type="ChEBI" id="CHEBI:15389"/>
        <dbReference type="ChEBI" id="CHEBI:57618"/>
        <dbReference type="ChEBI" id="CHEBI:58210"/>
        <dbReference type="EC" id="1.14.14.51"/>
    </reaction>
</comment>
<comment type="catalytic activity">
    <reaction evidence="4">
        <text>(4S)-limonene + reduced [NADPH--hemoprotein reductase] + O2 = (4S)-perillyl alcohol + oxidized [NADPH--hemoprotein reductase] + H2O + H(+)</text>
        <dbReference type="Rhea" id="RHEA:23432"/>
        <dbReference type="Rhea" id="RHEA-COMP:11964"/>
        <dbReference type="Rhea" id="RHEA-COMP:11965"/>
        <dbReference type="ChEBI" id="CHEBI:10782"/>
        <dbReference type="ChEBI" id="CHEBI:15377"/>
        <dbReference type="ChEBI" id="CHEBI:15378"/>
        <dbReference type="ChEBI" id="CHEBI:15379"/>
        <dbReference type="ChEBI" id="CHEBI:15383"/>
        <dbReference type="ChEBI" id="CHEBI:57618"/>
        <dbReference type="ChEBI" id="CHEBI:58210"/>
        <dbReference type="EC" id="1.14.14.52"/>
    </reaction>
</comment>
<comment type="cofactor">
    <cofactor>
        <name>heme</name>
        <dbReference type="ChEBI" id="CHEBI:30413"/>
    </cofactor>
</comment>
<comment type="biophysicochemical properties">
    <kinetics>
        <KM evidence="8">12.2 uM for (5Z,8Z,11Z,14Z,17Z)-eicosapentaenoate (epoxygenation)</KM>
        <KM evidence="8">14.3 uM for (5Z,8Z,11Z,14Z)-eicosatetraenoate (epoxygenation)</KM>
        <KM evidence="17">1.25 mM for S-mephenytoin</KM>
        <KM evidence="14">46.24 uM for tolbutamide</KM>
        <KM evidence="14">4.73 uM for diclofenac</KM>
        <KM evidence="14">1.58 uM for losartan</KM>
        <Vmax evidence="14">210.3 pmol/min/pmol enzyme with losartan as substrate</Vmax>
        <Vmax evidence="8">29.1 nmol/min/nmol enzyme toward (5Z,8Z,11Z,14Z,17Z)-eicosapentaenoate (epoxidation)</Vmax>
        <Vmax evidence="8">29.2 nmol/min/nmol enzyme toward (5Z,8Z,11Z,14Z)-eicosatetraenoate (epoxidation)</Vmax>
        <Vmax evidence="14">9.22 pmol/min/pmol enzyme with tolbutamide as substrate</Vmax>
        <Vmax evidence="14">17.16 pmol/min/pmol enzyme with diclofenac as substrate</Vmax>
    </kinetics>
</comment>
<comment type="pathway">
    <text evidence="8 9 20 23">Lipid metabolism; arachidonate metabolism.</text>
</comment>
<comment type="pathway">
    <text evidence="11">Steroid metabolism; cholesterol metabolism.</text>
</comment>
<comment type="pathway">
    <text evidence="4">Terpene metabolism; (4R)-limonene degradation.</text>
</comment>
<comment type="subcellular location">
    <subcellularLocation>
        <location>Endoplasmic reticulum membrane</location>
        <topology>Peripheral membrane protein</topology>
    </subcellularLocation>
    <subcellularLocation>
        <location evidence="11">Microsome membrane</location>
        <topology>Peripheral membrane protein</topology>
    </subcellularLocation>
</comment>
<comment type="alternative products">
    <event type="alternative splicing"/>
    <isoform>
        <id>P11712-1</id>
        <name>1</name>
        <sequence type="displayed"/>
    </isoform>
    <isoform>
        <id>P11712-2</id>
        <name>2</name>
        <sequence type="described" ref="VSP_055573 VSP_055574"/>
    </isoform>
</comment>
<comment type="induction">
    <text>By rifampicin.</text>
</comment>
<comment type="similarity">
    <text evidence="31">Belongs to the cytochrome P450 family.</text>
</comment>
<comment type="online information" name="PharmVar Pharmacogen Variation Consortium">
    <link uri="https://www.pharmvar.org/gene/CYP2C9"/>
    <text>CYP2C9 alleles</text>
</comment>
<dbReference type="EC" id="1.14.14.1" evidence="5 11 23 24"/>
<dbReference type="EC" id="1.14.14.53" evidence="4"/>
<dbReference type="EC" id="1.14.14.51" evidence="4"/>
<dbReference type="EC" id="1.14.14.52" evidence="4"/>
<dbReference type="EMBL" id="AY341248">
    <property type="protein sequence ID" value="AAP88931.1"/>
    <property type="molecule type" value="Genomic_DNA"/>
</dbReference>
<dbReference type="EMBL" id="AY702706">
    <property type="protein sequence ID" value="AAT94065.1"/>
    <property type="molecule type" value="Genomic_DNA"/>
</dbReference>
<dbReference type="EMBL" id="AK289420">
    <property type="protein sequence ID" value="BAF82109.1"/>
    <property type="molecule type" value="mRNA"/>
</dbReference>
<dbReference type="EMBL" id="AL359672">
    <property type="status" value="NOT_ANNOTATED_CDS"/>
    <property type="molecule type" value="Genomic_DNA"/>
</dbReference>
<dbReference type="EMBL" id="CH471066">
    <property type="protein sequence ID" value="EAW50019.1"/>
    <property type="molecule type" value="Genomic_DNA"/>
</dbReference>
<dbReference type="EMBL" id="CH471066">
    <property type="protein sequence ID" value="EAW50020.1"/>
    <property type="molecule type" value="Genomic_DNA"/>
</dbReference>
<dbReference type="EMBL" id="BC020754">
    <property type="protein sequence ID" value="AAH20754.1"/>
    <property type="molecule type" value="mRNA"/>
</dbReference>
<dbReference type="EMBL" id="BC070317">
    <property type="protein sequence ID" value="AAH70317.1"/>
    <property type="molecule type" value="mRNA"/>
</dbReference>
<dbReference type="EMBL" id="BC125054">
    <property type="protein sequence ID" value="AAI25055.1"/>
    <property type="molecule type" value="mRNA"/>
</dbReference>
<dbReference type="EMBL" id="D00173">
    <property type="protein sequence ID" value="BAA00123.1"/>
    <property type="molecule type" value="mRNA"/>
</dbReference>
<dbReference type="EMBL" id="M15331">
    <property type="protein sequence ID" value="AAA52157.1"/>
    <property type="molecule type" value="mRNA"/>
</dbReference>
<dbReference type="EMBL" id="M21939">
    <property type="protein sequence ID" value="AAA52158.1"/>
    <property type="molecule type" value="mRNA"/>
</dbReference>
<dbReference type="EMBL" id="M21940">
    <property type="protein sequence ID" value="AAA52159.1"/>
    <property type="molecule type" value="mRNA"/>
</dbReference>
<dbReference type="EMBL" id="S46963">
    <property type="protein sequence ID" value="AAB23864.2"/>
    <property type="status" value="ALT_SEQ"/>
    <property type="molecule type" value="mRNA"/>
</dbReference>
<dbReference type="CCDS" id="CCDS7437.1">
    <molecule id="P11712-1"/>
</dbReference>
<dbReference type="PIR" id="B38462">
    <property type="entry name" value="B38462"/>
</dbReference>
<dbReference type="PIR" id="D28951">
    <property type="entry name" value="D28951"/>
</dbReference>
<dbReference type="RefSeq" id="NP_000762.2">
    <molecule id="P11712-1"/>
    <property type="nucleotide sequence ID" value="NM_000771.3"/>
</dbReference>
<dbReference type="RefSeq" id="XP_016871247.1">
    <property type="nucleotide sequence ID" value="XM_017015758.1"/>
</dbReference>
<dbReference type="PDB" id="1OG2">
    <property type="method" value="X-ray"/>
    <property type="resolution" value="2.60 A"/>
    <property type="chains" value="A/B=30-490"/>
</dbReference>
<dbReference type="PDB" id="1OG5">
    <property type="method" value="X-ray"/>
    <property type="resolution" value="2.55 A"/>
    <property type="chains" value="A/B=30-490"/>
</dbReference>
<dbReference type="PDB" id="1R9O">
    <property type="method" value="X-ray"/>
    <property type="resolution" value="2.00 A"/>
    <property type="chains" value="A=18-490"/>
</dbReference>
<dbReference type="PDB" id="4NZ2">
    <property type="method" value="X-ray"/>
    <property type="resolution" value="2.45 A"/>
    <property type="chains" value="A/B=30-490"/>
</dbReference>
<dbReference type="PDB" id="5A5I">
    <property type="method" value="X-ray"/>
    <property type="resolution" value="2.00 A"/>
    <property type="chains" value="A=23-489"/>
</dbReference>
<dbReference type="PDB" id="5A5J">
    <property type="method" value="X-ray"/>
    <property type="resolution" value="2.90 A"/>
    <property type="chains" value="A=23-489"/>
</dbReference>
<dbReference type="PDB" id="5K7K">
    <property type="method" value="X-ray"/>
    <property type="resolution" value="2.30 A"/>
    <property type="chains" value="A=23-489"/>
</dbReference>
<dbReference type="PDB" id="5W0C">
    <property type="method" value="X-ray"/>
    <property type="resolution" value="2.00 A"/>
    <property type="chains" value="A=18-489"/>
</dbReference>
<dbReference type="PDB" id="5X23">
    <property type="method" value="X-ray"/>
    <property type="resolution" value="2.00 A"/>
    <property type="chains" value="A=19-490"/>
</dbReference>
<dbReference type="PDB" id="5X24">
    <property type="method" value="X-ray"/>
    <property type="resolution" value="2.48 A"/>
    <property type="chains" value="A=19-490"/>
</dbReference>
<dbReference type="PDB" id="5XXI">
    <property type="method" value="X-ray"/>
    <property type="resolution" value="2.30 A"/>
    <property type="chains" value="A=28-489"/>
</dbReference>
<dbReference type="PDB" id="6VLT">
    <property type="method" value="X-ray"/>
    <property type="resolution" value="3.12 A"/>
    <property type="chains" value="A/B/C/D/E/F/G/H=19-490"/>
</dbReference>
<dbReference type="PDB" id="7RL2">
    <property type="method" value="X-ray"/>
    <property type="resolution" value="2.23 A"/>
    <property type="chains" value="A=24-490"/>
</dbReference>
<dbReference type="PDB" id="8VX0">
    <property type="method" value="X-ray"/>
    <property type="resolution" value="3.05 A"/>
    <property type="chains" value="A=24-490"/>
</dbReference>
<dbReference type="PDB" id="8VZ7">
    <property type="method" value="X-ray"/>
    <property type="resolution" value="2.53 A"/>
    <property type="chains" value="A=24-490"/>
</dbReference>
<dbReference type="PDBsum" id="1OG2"/>
<dbReference type="PDBsum" id="1OG5"/>
<dbReference type="PDBsum" id="1R9O"/>
<dbReference type="PDBsum" id="4NZ2"/>
<dbReference type="PDBsum" id="5A5I"/>
<dbReference type="PDBsum" id="5A5J"/>
<dbReference type="PDBsum" id="5K7K"/>
<dbReference type="PDBsum" id="5W0C"/>
<dbReference type="PDBsum" id="5X23"/>
<dbReference type="PDBsum" id="5X24"/>
<dbReference type="PDBsum" id="5XXI"/>
<dbReference type="PDBsum" id="6VLT"/>
<dbReference type="PDBsum" id="7RL2"/>
<dbReference type="PDBsum" id="8VX0"/>
<dbReference type="PDBsum" id="8VZ7"/>
<dbReference type="SMR" id="P11712"/>
<dbReference type="BioGRID" id="107937">
    <property type="interactions" value="104"/>
</dbReference>
<dbReference type="CORUM" id="P11712"/>
<dbReference type="FunCoup" id="P11712">
    <property type="interactions" value="335"/>
</dbReference>
<dbReference type="IntAct" id="P11712">
    <property type="interactions" value="12"/>
</dbReference>
<dbReference type="STRING" id="9606.ENSP00000260682"/>
<dbReference type="BindingDB" id="P11712"/>
<dbReference type="ChEMBL" id="CHEMBL3397"/>
<dbReference type="DrugBank" id="DB08496">
    <property type="generic name" value="(R)-warfarin"/>
</dbReference>
<dbReference type="DrugBank" id="DB14055">
    <property type="generic name" value="(S)-Warfarin"/>
</dbReference>
<dbReference type="DrugBank" id="DB12001">
    <property type="generic name" value="Abemaciclib"/>
</dbReference>
<dbReference type="DrugBank" id="DB05812">
    <property type="generic name" value="Abiraterone"/>
</dbReference>
<dbReference type="DrugBank" id="DB14973">
    <property type="generic name" value="Abrocitinib"/>
</dbReference>
<dbReference type="DrugBank" id="DB06736">
    <property type="generic name" value="Aceclofenac"/>
</dbReference>
<dbReference type="DrugBank" id="DB01418">
    <property type="generic name" value="Acenocoumarol"/>
</dbReference>
<dbReference type="DrugBank" id="DB00414">
    <property type="generic name" value="Acetohexamide"/>
</dbReference>
<dbReference type="DrugBank" id="DB14033">
    <property type="generic name" value="Acetyl sulfisoxazole"/>
</dbReference>
<dbReference type="DrugBank" id="DB00945">
    <property type="generic name" value="Acetylsalicylic acid"/>
</dbReference>
<dbReference type="DrugBank" id="DB15568">
    <property type="generic name" value="Adagrasib"/>
</dbReference>
<dbReference type="DrugBank" id="DB06594">
    <property type="generic name" value="Agomelatine"/>
</dbReference>
<dbReference type="DrugBank" id="DB00969">
    <property type="generic name" value="Alosetron"/>
</dbReference>
<dbReference type="DrugBank" id="DB12015">
    <property type="generic name" value="Alpelisib"/>
</dbReference>
<dbReference type="DrugBank" id="DB00404">
    <property type="generic name" value="Alprazolam"/>
</dbReference>
<dbReference type="DrugBank" id="DB01424">
    <property type="generic name" value="Aminophenazone"/>
</dbReference>
<dbReference type="DrugBank" id="DB01118">
    <property type="generic name" value="Amiodarone"/>
</dbReference>
<dbReference type="DrugBank" id="DB00321">
    <property type="generic name" value="Amitriptyline"/>
</dbReference>
<dbReference type="DrugBank" id="DB00381">
    <property type="generic name" value="Amlodipine"/>
</dbReference>
<dbReference type="DrugBank" id="DB00613">
    <property type="generic name" value="Amodiaquine"/>
</dbReference>
<dbReference type="DrugBank" id="DB00701">
    <property type="generic name" value="Amprenavir"/>
</dbReference>
<dbReference type="DrugBank" id="DB17449">
    <property type="generic name" value="Anacaulase"/>
</dbReference>
<dbReference type="DrugBank" id="DB01217">
    <property type="generic name" value="Anastrozole"/>
</dbReference>
<dbReference type="DrugBank" id="DB01435">
    <property type="generic name" value="Antipyrine"/>
</dbReference>
<dbReference type="DrugBank" id="DB11901">
    <property type="generic name" value="Apalutamide"/>
</dbReference>
<dbReference type="DrugBank" id="DB06605">
    <property type="generic name" value="Apixaban"/>
</dbReference>
<dbReference type="DrugBank" id="DB00673">
    <property type="generic name" value="Aprepitant"/>
</dbReference>
<dbReference type="DrugBank" id="DB15059">
    <property type="generic name" value="Aprocitentan"/>
</dbReference>
<dbReference type="DrugBank" id="DB04557">
    <property type="generic name" value="Arachidonic Acid"/>
</dbReference>
<dbReference type="DrugBank" id="DB01274">
    <property type="generic name" value="Arformoterol"/>
</dbReference>
<dbReference type="DrugBank" id="DB06413">
    <property type="generic name" value="Armodafinil"/>
</dbReference>
<dbReference type="DrugBank" id="DB06697">
    <property type="generic name" value="Artemether"/>
</dbReference>
<dbReference type="DrugBank" id="DB12597">
    <property type="generic name" value="Asciminib"/>
</dbReference>
<dbReference type="DrugBank" id="DB11586">
    <property type="generic name" value="Asunaprevir"/>
</dbReference>
<dbReference type="DrugBank" id="DB01072">
    <property type="generic name" value="Atazanavir"/>
</dbReference>
<dbReference type="DrugBank" id="DB01076">
    <property type="generic name" value="Atorvastatin"/>
</dbReference>
<dbReference type="DrugBank" id="DB01117">
    <property type="generic name" value="Atovaquone"/>
</dbReference>
<dbReference type="DrugBank" id="DB15011">
    <property type="generic name" value="Avacopan"/>
</dbReference>
<dbReference type="DrugBank" id="DB06237">
    <property type="generic name" value="Avanafil"/>
</dbReference>
<dbReference type="DrugBank" id="DB15233">
    <property type="generic name" value="Avapritinib"/>
</dbReference>
<dbReference type="DrugBank" id="DB06442">
    <property type="generic name" value="Avasimibe"/>
</dbReference>
<dbReference type="DrugBank" id="DB11995">
    <property type="generic name" value="Avatrombopag"/>
</dbReference>
<dbReference type="DrugBank" id="DB00972">
    <property type="generic name" value="Azelastine"/>
</dbReference>
<dbReference type="DrugBank" id="DB08822">
    <property type="generic name" value="Azilsartan medoxomil"/>
</dbReference>
<dbReference type="DrugBank" id="DB05015">
    <property type="generic name" value="Belinostat"/>
</dbReference>
<dbReference type="DrugBank" id="DB12319">
    <property type="generic name" value="Benzbromarone"/>
</dbReference>
<dbReference type="DrugBank" id="DB00443">
    <property type="generic name" value="Betamethasone"/>
</dbReference>
<dbReference type="DrugBank" id="DB01128">
    <property type="generic name" value="Bicalutamide"/>
</dbReference>
<dbReference type="DrugBank" id="DB13746">
    <property type="generic name" value="Bioallethrin"/>
</dbReference>
<dbReference type="DrugBank" id="DB13975">
    <property type="generic name" value="Black cohosh"/>
</dbReference>
<dbReference type="DrugBank" id="DB00188">
    <property type="generic name" value="Bortezomib"/>
</dbReference>
<dbReference type="DrugBank" id="DB00559">
    <property type="generic name" value="Bosentan"/>
</dbReference>
<dbReference type="DrugBank" id="DB12151">
    <property type="generic name" value="Brincidofovir"/>
</dbReference>
<dbReference type="DrugBank" id="DB01194">
    <property type="generic name" value="Brinzolamide"/>
</dbReference>
<dbReference type="DrugBank" id="DB05541">
    <property type="generic name" value="Brivaracetam"/>
</dbReference>
<dbReference type="DrugBank" id="DB01222">
    <property type="generic name" value="Budesonide"/>
</dbReference>
<dbReference type="DrugBank" id="DB00921">
    <property type="generic name" value="Buprenorphine"/>
</dbReference>
<dbReference type="DrugBank" id="DB01156">
    <property type="generic name" value="Bupropion"/>
</dbReference>
<dbReference type="DrugBank" id="DB08875">
    <property type="generic name" value="Cabozantinib"/>
</dbReference>
<dbReference type="DrugBank" id="DB00201">
    <property type="generic name" value="Caffeine"/>
</dbReference>
<dbReference type="DrugBank" id="DB13919">
    <property type="generic name" value="Candesartan"/>
</dbReference>
<dbReference type="DrugBank" id="DB00796">
    <property type="generic name" value="Candesartan cilexetil"/>
</dbReference>
<dbReference type="DrugBank" id="DB09061">
    <property type="generic name" value="Cannabidiol"/>
</dbReference>
<dbReference type="DrugBank" id="DB14737">
    <property type="generic name" value="Cannabinol"/>
</dbReference>
<dbReference type="DrugBank" id="DB01101">
    <property type="generic name" value="Capecitabine"/>
</dbReference>
<dbReference type="DrugBank" id="DB08502">
    <property type="generic name" value="Capravirine"/>
</dbReference>
<dbReference type="DrugBank" id="DB00564">
    <property type="generic name" value="Carbamazepine"/>
</dbReference>
<dbReference type="DrugBank" id="DB13406">
    <property type="generic name" value="Carbutamide"/>
</dbReference>
<dbReference type="DrugBank" id="DB06016">
    <property type="generic name" value="Cariprazine"/>
</dbReference>
<dbReference type="DrugBank" id="DB01136">
    <property type="generic name" value="Carvedilol"/>
</dbReference>
<dbReference type="DrugBank" id="DB14984">
    <property type="generic name" value="Casimersen"/>
</dbReference>
<dbReference type="DrugBank" id="DB00482">
    <property type="generic name" value="Celecoxib"/>
</dbReference>
<dbReference type="DrugBank" id="DB09063">
    <property type="generic name" value="Ceritinib"/>
</dbReference>
<dbReference type="DrugBank" id="DB00439">
    <property type="generic name" value="Cerivastatin"/>
</dbReference>
<dbReference type="DrugBank" id="DB00672">
    <property type="generic name" value="Chlorpropamide"/>
</dbReference>
<dbReference type="DrugBank" id="DB00501">
    <property type="generic name" value="Cimetidine"/>
</dbReference>
<dbReference type="DrugBank" id="DB00568">
    <property type="generic name" value="Cinnarizine"/>
</dbReference>
<dbReference type="DrugBank" id="DB00604">
    <property type="generic name" value="Cisapride"/>
</dbReference>
<dbReference type="DrugBank" id="DB00515">
    <property type="generic name" value="Cisplatin"/>
</dbReference>
<dbReference type="DrugBank" id="DB12499">
    <property type="generic name" value="Clascoterone"/>
</dbReference>
<dbReference type="DrugBank" id="DB04920">
    <property type="generic name" value="Clevidipine"/>
</dbReference>
<dbReference type="DrugBank" id="DB14025">
    <property type="generic name" value="Clinafloxacin"/>
</dbReference>
<dbReference type="DrugBank" id="DB00349">
    <property type="generic name" value="Clobazam"/>
</dbReference>
<dbReference type="DrugBank" id="DB00758">
    <property type="generic name" value="Clopidogrel"/>
</dbReference>
<dbReference type="DrugBank" id="DB00257">
    <property type="generic name" value="Clotrimazole"/>
</dbReference>
<dbReference type="DrugBank" id="DB00363">
    <property type="generic name" value="Clozapine"/>
</dbReference>
<dbReference type="DrugBank" id="DB04665">
    <property type="generic name" value="Coumarin"/>
</dbReference>
<dbReference type="DrugBank" id="DB05219">
    <property type="generic name" value="Crisaborole"/>
</dbReference>
<dbReference type="DrugBank" id="DB11672">
    <property type="generic name" value="Curcumin"/>
</dbReference>
<dbReference type="DrugBank" id="DB14635">
    <property type="generic name" value="Curcumin sulfate"/>
</dbReference>
<dbReference type="DrugBank" id="DB01176">
    <property type="generic name" value="Cyclizine"/>
</dbReference>
<dbReference type="DrugBank" id="DB00531">
    <property type="generic name" value="Cyclophosphamide"/>
</dbReference>
<dbReference type="DrugBank" id="DB08912">
    <property type="generic name" value="Dabrafenib"/>
</dbReference>
<dbReference type="DrugBank" id="DB11963">
    <property type="generic name" value="Dacomitinib"/>
</dbReference>
<dbReference type="DrugBank" id="DB06292">
    <property type="generic name" value="Dapagliflozin"/>
</dbReference>
<dbReference type="DrugBank" id="DB00250">
    <property type="generic name" value="Dapsone"/>
</dbReference>
<dbReference type="DrugBank" id="DB11943">
    <property type="generic name" value="Delafloxacin"/>
</dbReference>
<dbReference type="DrugBank" id="DB00705">
    <property type="generic name" value="Delavirdine"/>
</dbReference>
<dbReference type="DrugBank" id="DB00304">
    <property type="generic name" value="Desogestrel"/>
</dbReference>
<dbReference type="DrugBank" id="DB18847">
    <property type="generic name" value="Deuruxolitinib"/>
</dbReference>
<dbReference type="DrugBank" id="DB09213">
    <property type="generic name" value="Dexibuprofen"/>
</dbReference>
<dbReference type="DrugBank" id="DB04856">
    <property type="generic name" value="Dexloxiglumide"/>
</dbReference>
<dbReference type="DrugBank" id="DB00514">
    <property type="generic name" value="Dextromethorphan"/>
</dbReference>
<dbReference type="DrugBank" id="DB11994">
    <property type="generic name" value="Diacerein"/>
</dbReference>
<dbReference type="DrugBank" id="DB00829">
    <property type="generic name" value="Diazepam"/>
</dbReference>
<dbReference type="DrugBank" id="DB00586">
    <property type="generic name" value="Diclofenac"/>
</dbReference>
<dbReference type="DrugBank" id="DB00266">
    <property type="generic name" value="Dicoumarol"/>
</dbReference>
<dbReference type="DrugBank" id="DB00255">
    <property type="generic name" value="Diethylstilbestrol"/>
</dbReference>
<dbReference type="DrugBank" id="DB08995">
    <property type="generic name" value="Diosmin"/>
</dbReference>
<dbReference type="DrugBank" id="DB01075">
    <property type="generic name" value="Diphenhydramine"/>
</dbReference>
<dbReference type="DrugBank" id="DB03756">
    <property type="generic name" value="Doconexent"/>
</dbReference>
<dbReference type="DrugBank" id="DB00757">
    <property type="generic name" value="Dolasetron"/>
</dbReference>
<dbReference type="DrugBank" id="DB00843">
    <property type="generic name" value="Donepezil"/>
</dbReference>
<dbReference type="DrugBank" id="DB00869">
    <property type="generic name" value="Dorzolamide"/>
</dbReference>
<dbReference type="DrugBank" id="DB09167">
    <property type="generic name" value="Dosulepin"/>
</dbReference>
<dbReference type="DrugBank" id="DB00590">
    <property type="generic name" value="Doxazosin"/>
</dbReference>
<dbReference type="DrugBank" id="DB01142">
    <property type="generic name" value="Doxepin"/>
</dbReference>
<dbReference type="DrugBank" id="DB00470">
    <property type="generic name" value="Dronabinol"/>
</dbReference>
<dbReference type="DrugBank" id="DB00476">
    <property type="generic name" value="Duloxetine"/>
</dbReference>
<dbReference type="DrugBank" id="DB00625">
    <property type="generic name" value="Efavirenz"/>
</dbReference>
<dbReference type="DrugBank" id="DB06374">
    <property type="generic name" value="Elacestrant"/>
</dbReference>
<dbReference type="DrugBank" id="DB00216">
    <property type="generic name" value="Eletriptan"/>
</dbReference>
<dbReference type="DrugBank" id="DB15444">
    <property type="generic name" value="Elexacaftor"/>
</dbReference>
<dbReference type="DrugBank" id="DB13874">
    <property type="generic name" value="Enasidenib"/>
</dbReference>
<dbReference type="DrugBank" id="DB11718">
    <property type="generic name" value="Encorafenib"/>
</dbReference>
<dbReference type="DrugBank" id="DB16157">
    <property type="generic name" value="Ensifentrine"/>
</dbReference>
<dbReference type="DrugBank" id="DB08899">
    <property type="generic name" value="Enzalutamide"/>
</dbReference>
<dbReference type="DrugBank" id="DB00668">
    <property type="generic name" value="Epinephrine"/>
</dbReference>
<dbReference type="DrugBank" id="DB12147">
    <property type="generic name" value="Erdafitinib"/>
</dbReference>
<dbReference type="DrugBank" id="DB11823">
    <property type="generic name" value="Esketamine"/>
</dbReference>
<dbReference type="DrugBank" id="DB00783">
    <property type="generic name" value="Estradiol"/>
</dbReference>
<dbReference type="DrugBank" id="DB13952">
    <property type="generic name" value="Estradiol acetate"/>
</dbReference>
<dbReference type="DrugBank" id="DB13953">
    <property type="generic name" value="Estradiol benzoate"/>
</dbReference>
<dbReference type="DrugBank" id="DB13954">
    <property type="generic name" value="Estradiol cypionate"/>
</dbReference>
<dbReference type="DrugBank" id="DB13955">
    <property type="generic name" value="Estradiol dienanthate"/>
</dbReference>
<dbReference type="DrugBank" id="DB13956">
    <property type="generic name" value="Estradiol valerate"/>
</dbReference>
<dbReference type="DrugBank" id="DB00655">
    <property type="generic name" value="Estrone"/>
</dbReference>
<dbReference type="DrugBank" id="DB04574">
    <property type="generic name" value="Estrone sulfate"/>
</dbReference>
<dbReference type="DrugBank" id="DB00330">
    <property type="generic name" value="Ethambutol"/>
</dbReference>
<dbReference type="DrugBank" id="DB00898">
    <property type="generic name" value="Ethanol"/>
</dbReference>
<dbReference type="DrugBank" id="DB00977">
    <property type="generic name" value="Ethinylestradiol"/>
</dbReference>
<dbReference type="DrugBank" id="DB00749">
    <property type="generic name" value="Etodolac"/>
</dbReference>
<dbReference type="DrugBank" id="DB01628">
    <property type="generic name" value="Etoricoxib"/>
</dbReference>
<dbReference type="DrugBank" id="DB14766">
    <property type="generic name" value="Etrasimod"/>
</dbReference>
<dbReference type="DrugBank" id="DB06414">
    <property type="generic name" value="Etravirine"/>
</dbReference>
<dbReference type="DrugBank" id="DB04854">
    <property type="generic name" value="Febuxostat"/>
</dbReference>
<dbReference type="DrugBank" id="DB00949">
    <property type="generic name" value="Felbamate"/>
</dbReference>
<dbReference type="DrugBank" id="DB01023">
    <property type="generic name" value="Felodipine"/>
</dbReference>
<dbReference type="DrugBank" id="DB00574">
    <property type="generic name" value="Fenfluramine"/>
</dbReference>
<dbReference type="DrugBank" id="DB01039">
    <property type="generic name" value="Fenofibrate"/>
</dbReference>
<dbReference type="DrugBank" id="DB03317">
    <property type="generic name" value="Ferroheme C"/>
</dbReference>
<dbReference type="DrugBank" id="DB15669">
    <property type="generic name" value="Fezolinetant"/>
</dbReference>
<dbReference type="DrugBank" id="DB01195">
    <property type="generic name" value="Flecainide"/>
</dbReference>
<dbReference type="DrugBank" id="DB00322">
    <property type="generic name" value="Floxuridine"/>
</dbReference>
<dbReference type="DrugBank" id="DB00196">
    <property type="generic name" value="Fluconazole"/>
</dbReference>
<dbReference type="DrugBank" id="DB13136">
    <property type="generic name" value="Fluindione"/>
</dbReference>
<dbReference type="DrugBank" id="DB04841">
    <property type="generic name" value="Flunarizine"/>
</dbReference>
<dbReference type="DrugBank" id="DB01544">
    <property type="generic name" value="Flunitrazepam"/>
</dbReference>
<dbReference type="DrugBank" id="DB00544">
    <property type="generic name" value="Fluorouracil"/>
</dbReference>
<dbReference type="DrugBank" id="DB00472">
    <property type="generic name" value="Fluoxetine"/>
</dbReference>
<dbReference type="DrugBank" id="DB00712">
    <property type="generic name" value="Flurbiprofen"/>
</dbReference>
<dbReference type="DrugBank" id="DB01095">
    <property type="generic name" value="Fluvastatin"/>
</dbReference>
<dbReference type="DrugBank" id="DB00176">
    <property type="generic name" value="Fluvoxamine"/>
</dbReference>
<dbReference type="DrugBank" id="DB00983">
    <property type="generic name" value="Formoterol"/>
</dbReference>
<dbReference type="DrugBank" id="DB06717">
    <property type="generic name" value="Fosaprepitant"/>
</dbReference>
<dbReference type="DrugBank" id="DB01320">
    <property type="generic name" value="Fosphenytoin"/>
</dbReference>
<dbReference type="DrugBank" id="DB11679">
    <property type="generic name" value="Fruquintinib"/>
</dbReference>
<dbReference type="DrugBank" id="DB15149">
    <property type="generic name" value="Futibatinib"/>
</dbReference>
<dbReference type="DrugBank" id="DB00317">
    <property type="generic name" value="Gefitinib"/>
</dbReference>
<dbReference type="DrugBank" id="DB01241">
    <property type="generic name" value="Gemfibrozil"/>
</dbReference>
<dbReference type="DrugBank" id="DB01645">
    <property type="generic name" value="Genistein"/>
</dbReference>
<dbReference type="DrugBank" id="DB01381">
    <property type="generic name" value="Ginkgo biloba"/>
</dbReference>
<dbReference type="DrugBank" id="DB08962">
    <property type="generic name" value="Glibornuride"/>
</dbReference>
<dbReference type="DrugBank" id="DB01120">
    <property type="generic name" value="Gliclazide"/>
</dbReference>
<dbReference type="DrugBank" id="DB00222">
    <property type="generic name" value="Glimepiride"/>
</dbReference>
<dbReference type="DrugBank" id="DB01067">
    <property type="generic name" value="Glipizide"/>
</dbReference>
<dbReference type="DrugBank" id="DB01251">
    <property type="generic name" value="Gliquidone"/>
</dbReference>
<dbReference type="DrugBank" id="DB01289">
    <property type="generic name" value="Glisoxepide"/>
</dbReference>
<dbReference type="DrugBank" id="DB01016">
    <property type="generic name" value="Glyburide"/>
</dbReference>
<dbReference type="DrugBank" id="DB00986">
    <property type="generic name" value="Glycopyrronium"/>
</dbReference>
<dbReference type="DrugBank" id="DB00502">
    <property type="generic name" value="Haloperidol"/>
</dbReference>
<dbReference type="DrugBank" id="DB01159">
    <property type="generic name" value="Halothane"/>
</dbReference>
<dbReference type="DrugBank" id="DB01355">
    <property type="generic name" value="Hexobarbital"/>
</dbReference>
<dbReference type="DrugBank" id="DB00741">
    <property type="generic name" value="Hydrocortisone"/>
</dbReference>
<dbReference type="DrugBank" id="DB00327">
    <property type="generic name" value="Hydromorphone"/>
</dbReference>
<dbReference type="DrugBank" id="DB01050">
    <property type="generic name" value="Ibuprofen"/>
</dbReference>
<dbReference type="DrugBank" id="DB01177">
    <property type="generic name" value="Idarubicin"/>
</dbReference>
<dbReference type="DrugBank" id="DB01181">
    <property type="generic name" value="Ifosfamide"/>
</dbReference>
<dbReference type="DrugBank" id="DB00619">
    <property type="generic name" value="Imatinib"/>
</dbReference>
<dbReference type="DrugBank" id="DB06370">
    <property type="generic name" value="Indisulam"/>
</dbReference>
<dbReference type="DrugBank" id="DB00328">
    <property type="generic name" value="Indomethacin"/>
</dbReference>
<dbReference type="DrugBank" id="DB04818">
    <property type="generic name" value="Iproniazid"/>
</dbReference>
<dbReference type="DrugBank" id="DB01029">
    <property type="generic name" value="Irbesartan"/>
</dbReference>
<dbReference type="DrugBank" id="DB11633">
    <property type="generic name" value="Isavuconazole"/>
</dbReference>
<dbReference type="DrugBank" id="DB06636">
    <property type="generic name" value="Isavuconazonium"/>
</dbReference>
<dbReference type="DrugBank" id="DB00951">
    <property type="generic name" value="Isoniazid"/>
</dbReference>
<dbReference type="DrugBank" id="DB11757">
    <property type="generic name" value="Istradefylline"/>
</dbReference>
<dbReference type="DrugBank" id="DB08820">
    <property type="generic name" value="Ivacaftor"/>
</dbReference>
<dbReference type="DrugBank" id="DB14568">
    <property type="generic name" value="Ivosidenib"/>
</dbReference>
<dbReference type="DrugBank" id="DB09570">
    <property type="generic name" value="Ixazomib"/>
</dbReference>
<dbReference type="DrugBank" id="DB01221">
    <property type="generic name" value="Ketamine"/>
</dbReference>
<dbReference type="DrugBank" id="DB06738">
    <property type="generic name" value="Ketobemidone"/>
</dbReference>
<dbReference type="DrugBank" id="DB01026">
    <property type="generic name" value="Ketoconazole"/>
</dbReference>
<dbReference type="DrugBank" id="DB01009">
    <property type="generic name" value="Ketoprofen"/>
</dbReference>
<dbReference type="DrugBank" id="DB00465">
    <property type="generic name" value="Ketorolac"/>
</dbReference>
<dbReference type="DrugBank" id="DB06218">
    <property type="generic name" value="Lacosamide"/>
</dbReference>
<dbReference type="DrugBank" id="DB00448">
    <property type="generic name" value="Lansoprazole"/>
</dbReference>
<dbReference type="DrugBank" id="DB01097">
    <property type="generic name" value="Leflunomide"/>
</dbReference>
<dbReference type="DrugBank" id="DB09078">
    <property type="generic name" value="Lenvatinib"/>
</dbReference>
<dbReference type="DrugBank" id="DB11560">
    <property type="generic name" value="Lesinurad"/>
</dbReference>
<dbReference type="DrugBank" id="DB12070">
    <property type="generic name" value="Letermovir"/>
</dbReference>
<dbReference type="DrugBank" id="DB01137">
    <property type="generic name" value="Levofloxacin"/>
</dbReference>
<dbReference type="DrugBank" id="DB04725">
    <property type="generic name" value="Licofelone"/>
</dbReference>
<dbReference type="DrugBank" id="DB00281">
    <property type="generic name" value="Lidocaine"/>
</dbReference>
<dbReference type="DrugBank" id="DB11611">
    <property type="generic name" value="Lifitegrast"/>
</dbReference>
<dbReference type="DrugBank" id="DB17083">
    <property type="generic name" value="Linzagolix"/>
</dbReference>
<dbReference type="DrugBank" id="DB09198">
    <property type="generic name" value="Lobeglitazone"/>
</dbReference>
<dbReference type="DrugBank" id="DB06448">
    <property type="generic name" value="Lonafarnib"/>
</dbReference>
<dbReference type="DrugBank" id="DB01601">
    <property type="generic name" value="Lopinavir"/>
</dbReference>
<dbReference type="DrugBank" id="DB00455">
    <property type="generic name" value="Loratadine"/>
</dbReference>
<dbReference type="DrugBank" id="DB06725">
    <property type="generic name" value="Lornoxicam"/>
</dbReference>
<dbReference type="DrugBank" id="DB00678">
    <property type="generic name" value="Losartan"/>
</dbReference>
<dbReference type="DrugBank" id="DB09280">
    <property type="generic name" value="Lumacaftor"/>
</dbReference>
<dbReference type="DrugBank" id="DB01283">
    <property type="generic name" value="Lumiracoxib"/>
</dbReference>
<dbReference type="DrugBank" id="DB12474">
    <property type="generic name" value="Lynestrenol"/>
</dbReference>
<dbReference type="DrugBank" id="DB08932">
    <property type="generic name" value="Macitentan"/>
</dbReference>
<dbReference type="DrugBank" id="DB09238">
    <property type="generic name" value="Manidipine"/>
</dbReference>
<dbReference type="DrugBank" id="DB14921">
    <property type="generic name" value="Mavacamten"/>
</dbReference>
<dbReference type="DrugBank" id="DB05501">
    <property type="generic name" value="Mavorixafor"/>
</dbReference>
<dbReference type="DrugBank" id="DB14009">
    <property type="generic name" value="Medical Cannabis"/>
</dbReference>
<dbReference type="DrugBank" id="DB00603">
    <property type="generic name" value="Medroxyprogesterone acetate"/>
</dbReference>
<dbReference type="DrugBank" id="DB00784">
    <property type="generic name" value="Mefenamic acid"/>
</dbReference>
<dbReference type="DrugBank" id="DB01065">
    <property type="generic name" value="Melatonin"/>
</dbReference>
<dbReference type="DrugBank" id="DB00814">
    <property type="generic name" value="Meloxicam"/>
</dbReference>
<dbReference type="DrugBank" id="DB00170">
    <property type="generic name" value="Menadione"/>
</dbReference>
<dbReference type="DrugBank" id="DB00532">
    <property type="generic name" value="Mephenytoin"/>
</dbReference>
<dbReference type="DrugBank" id="DB01357">
    <property type="generic name" value="Mestranol"/>
</dbReference>
<dbReference type="DrugBank" id="DB13675">
    <property type="generic name" value="Metahexamide"/>
</dbReference>
<dbReference type="DrugBank" id="DB00333">
    <property type="generic name" value="Methadone"/>
</dbReference>
<dbReference type="DrugBank" id="DB00763">
    <property type="generic name" value="Methimazole"/>
</dbReference>
<dbReference type="DrugBank" id="DB01028">
    <property type="generic name" value="Methoxyflurane"/>
</dbReference>
<dbReference type="DrugBank" id="DB09241">
    <property type="generic name" value="Methylene blue"/>
</dbReference>
<dbReference type="DrugBank" id="DB00959">
    <property type="generic name" value="Methylprednisolone"/>
</dbReference>
<dbReference type="DrugBank" id="DB00916">
    <property type="generic name" value="Metronidazole"/>
</dbReference>
<dbReference type="DrugBank" id="DB01110">
    <property type="generic name" value="Miconazole"/>
</dbReference>
<dbReference type="DrugBank" id="DB06595">
    <property type="generic name" value="Midostaurin"/>
</dbReference>
<dbReference type="DrugBank" id="DB00834">
    <property type="generic name" value="Mifepristone"/>
</dbReference>
<dbReference type="DrugBank" id="DB16236">
    <property type="generic name" value="Mitapivat"/>
</dbReference>
<dbReference type="DrugBank" id="DB01171">
    <property type="generic name" value="Moclobemide"/>
</dbReference>
<dbReference type="DrugBank" id="DB00745">
    <property type="generic name" value="Modafinil"/>
</dbReference>
<dbReference type="DrugBank" id="DB11763">
    <property type="generic name" value="Momelotinib"/>
</dbReference>
<dbReference type="DrugBank" id="DB00471">
    <property type="generic name" value="Montelukast"/>
</dbReference>
<dbReference type="DrugBank" id="DB00486">
    <property type="generic name" value="Nabilone"/>
</dbReference>
<dbReference type="DrugBank" id="DB14011">
    <property type="generic name" value="Nabiximols"/>
</dbReference>
<dbReference type="DrugBank" id="DB00461">
    <property type="generic name" value="Nabumetone"/>
</dbReference>
<dbReference type="DrugBank" id="DB00788">
    <property type="generic name" value="Naproxen"/>
</dbReference>
<dbReference type="DrugBank" id="DB00731">
    <property type="generic name" value="Nateglinide"/>
</dbReference>
<dbReference type="DrugBank" id="DB00220">
    <property type="generic name" value="Nelfinavir"/>
</dbReference>
<dbReference type="DrugBank" id="DB09048">
    <property type="generic name" value="Netupitant"/>
</dbReference>
<dbReference type="DrugBank" id="DB00238">
    <property type="generic name" value="Nevirapine"/>
</dbReference>
<dbReference type="DrugBank" id="DB00622">
    <property type="generic name" value="Nicardipine"/>
</dbReference>
<dbReference type="DrugBank" id="DB06803">
    <property type="generic name" value="Niclosamide"/>
</dbReference>
<dbReference type="DrugBank" id="DB00184">
    <property type="generic name" value="Nicotine"/>
</dbReference>
<dbReference type="DrugBank" id="DB01115">
    <property type="generic name" value="Nifedipine"/>
</dbReference>
<dbReference type="DrugBank" id="DB04868">
    <property type="generic name" value="Nilotinib"/>
</dbReference>
<dbReference type="DrugBank" id="DB12005">
    <property type="generic name" value="Nirogacestat"/>
</dbReference>
<dbReference type="DrugBank" id="DB00957">
    <property type="generic name" value="Norgestimate"/>
</dbReference>
<dbReference type="DrugBank" id="DB06174">
    <property type="generic name" value="Noscapine"/>
</dbReference>
<dbReference type="DrugBank" id="DB00334">
    <property type="generic name" value="Olanzapine"/>
</dbReference>
<dbReference type="DrugBank" id="DB14881">
    <property type="generic name" value="Oliceridine"/>
</dbReference>
<dbReference type="DrugBank" id="DB09080">
    <property type="generic name" value="Olodaterol"/>
</dbReference>
<dbReference type="DrugBank" id="DB16267">
    <property type="generic name" value="Olutasidenib"/>
</dbReference>
<dbReference type="DrugBank" id="DB00338">
    <property type="generic name" value="Omeprazole"/>
</dbReference>
<dbReference type="DrugBank" id="DB00904">
    <property type="generic name" value="Ondansetron"/>
</dbReference>
<dbReference type="DrugBank" id="DB11632">
    <property type="generic name" value="Opicapone"/>
</dbReference>
<dbReference type="DrugBank" id="DB04911">
    <property type="generic name" value="Oritavancin"/>
</dbReference>
<dbReference type="DrugBank" id="DB04938">
    <property type="generic name" value="Ospemifene"/>
</dbReference>
<dbReference type="DrugBank" id="DB00621">
    <property type="generic name" value="Oxandrolone"/>
</dbReference>
<dbReference type="DrugBank" id="DB00617">
    <property type="generic name" value="Paramethadione"/>
</dbReference>
<dbReference type="DrugBank" id="DB08439">
    <property type="generic name" value="Parecoxib"/>
</dbReference>
<dbReference type="DrugBank" id="DB00715">
    <property type="generic name" value="Paroxetine"/>
</dbReference>
<dbReference type="DrugBank" id="DB00022">
    <property type="generic name" value="Peginterferon alfa-2b"/>
</dbReference>
<dbReference type="DrugBank" id="DB00850">
    <property type="generic name" value="Perphenazine"/>
</dbReference>
<dbReference type="DrugBank" id="DB12978">
    <property type="generic name" value="Pexidartinib"/>
</dbReference>
<dbReference type="DrugBank" id="DB03783">
    <property type="generic name" value="Phenacetin"/>
</dbReference>
<dbReference type="DrugBank" id="DB01174">
    <property type="generic name" value="Phenobarbital"/>
</dbReference>
<dbReference type="DrugBank" id="DB00946">
    <property type="generic name" value="Phenprocoumon"/>
</dbReference>
<dbReference type="DrugBank" id="DB00812">
    <property type="generic name" value="Phenylbutazone"/>
</dbReference>
<dbReference type="DrugBank" id="DB00252">
    <property type="generic name" value="Phenytoin"/>
</dbReference>
<dbReference type="DrugBank" id="DB13941">
    <property type="generic name" value="Piperaquine"/>
</dbReference>
<dbReference type="DrugBank" id="DB04951">
    <property type="generic name" value="Pirfenidone"/>
</dbReference>
<dbReference type="DrugBank" id="DB00554">
    <property type="generic name" value="Piroxicam"/>
</dbReference>
<dbReference type="DrugBank" id="DB17472">
    <property type="generic name" value="Pirtobrutinib"/>
</dbReference>
<dbReference type="DrugBank" id="DB08860">
    <property type="generic name" value="Pitavastatin"/>
</dbReference>
<dbReference type="DrugBank" id="DB15822">
    <property type="generic name" value="Pralsetinib"/>
</dbReference>
<dbReference type="DrugBank" id="DB01411">
    <property type="generic name" value="Pranlukast"/>
</dbReference>
<dbReference type="DrugBank" id="DB06209">
    <property type="generic name" value="Prasugrel"/>
</dbReference>
<dbReference type="DrugBank" id="DB14631">
    <property type="generic name" value="Prednisolone phosphate"/>
</dbReference>
<dbReference type="DrugBank" id="DB00635">
    <property type="generic name" value="Prednisone"/>
</dbReference>
<dbReference type="DrugBank" id="DB00794">
    <property type="generic name" value="Primidone"/>
</dbReference>
<dbReference type="DrugBank" id="DB01032">
    <property type="generic name" value="Probenecid"/>
</dbReference>
<dbReference type="DrugBank" id="DB00396">
    <property type="generic name" value="Progesterone"/>
</dbReference>
<dbReference type="DrugBank" id="DB01131">
    <property type="generic name" value="Proguanil"/>
</dbReference>
<dbReference type="DrugBank" id="DB00420">
    <property type="generic name" value="Promazine"/>
</dbReference>
<dbReference type="DrugBank" id="DB01069">
    <property type="generic name" value="Promethazine"/>
</dbReference>
<dbReference type="DrugBank" id="DB09288">
    <property type="generic name" value="Propacetamol"/>
</dbReference>
<dbReference type="DrugBank" id="DB00818">
    <property type="generic name" value="Propofol"/>
</dbReference>
<dbReference type="DrugBank" id="DB01589">
    <property type="generic name" value="Quazepam"/>
</dbReference>
<dbReference type="DrugBank" id="DB04216">
    <property type="generic name" value="Quercetin"/>
</dbReference>
<dbReference type="DrugBank" id="DB00908">
    <property type="generic name" value="Quinidine"/>
</dbReference>
<dbReference type="DrugBank" id="DB00468">
    <property type="generic name" value="Quinine"/>
</dbReference>
<dbReference type="DrugBank" id="DB01129">
    <property type="generic name" value="Rabeprazole"/>
</dbReference>
<dbReference type="DrugBank" id="DB00980">
    <property type="generic name" value="Ramelteon"/>
</dbReference>
<dbReference type="DrugBank" id="DB08896">
    <property type="generic name" value="Regorafenib"/>
</dbReference>
<dbReference type="DrugBank" id="DB16826">
    <property type="generic name" value="Repotrectinib"/>
</dbReference>
<dbReference type="DrugBank" id="DB02709">
    <property type="generic name" value="Resveratrol"/>
</dbReference>
<dbReference type="DrugBank" id="DB13174">
    <property type="generic name" value="Rhein"/>
</dbReference>
<dbReference type="DrugBank" id="DB00615">
    <property type="generic name" value="Rifabutin"/>
</dbReference>
<dbReference type="DrugBank" id="DB01045">
    <property type="generic name" value="Rifampin"/>
</dbReference>
<dbReference type="DrugBank" id="DB11753">
    <property type="generic name" value="Rifamycin"/>
</dbReference>
<dbReference type="DrugBank" id="DB01201">
    <property type="generic name" value="Rifapentine"/>
</dbReference>
<dbReference type="DrugBank" id="DB08864">
    <property type="generic name" value="Rilpivirine"/>
</dbReference>
<dbReference type="DrugBank" id="DB12457">
    <property type="generic name" value="Rimegepant"/>
</dbReference>
<dbReference type="DrugBank" id="DB14924">
    <property type="generic name" value="Ritlecitinib"/>
</dbReference>
<dbReference type="DrugBank" id="DB00503">
    <property type="generic name" value="Ritonavir"/>
</dbReference>
<dbReference type="DrugBank" id="DB00533">
    <property type="generic name" value="Rofecoxib"/>
</dbReference>
<dbReference type="DrugBank" id="DB00412">
    <property type="generic name" value="Rosiglitazone"/>
</dbReference>
<dbReference type="DrugBank" id="DB01098">
    <property type="generic name" value="Rosuvastatin"/>
</dbReference>
<dbReference type="DrugBank" id="DB12332">
    <property type="generic name" value="Rucaparib"/>
</dbReference>
<dbReference type="DrugBank" id="DB11614">
    <property type="generic name" value="Rupatadine"/>
</dbReference>
<dbReference type="DrugBank" id="DB08877">
    <property type="generic name" value="Ruxolitinib"/>
</dbReference>
<dbReference type="DrugBank" id="DB00936">
    <property type="generic name" value="Salicylic acid"/>
</dbReference>
<dbReference type="DrugBank" id="DB00418">
    <property type="generic name" value="Secobarbital"/>
</dbReference>
<dbReference type="DrugBank" id="DB12390">
    <property type="generic name" value="Seladelpar"/>
</dbReference>
<dbReference type="DrugBank" id="DB01037">
    <property type="generic name" value="Selegiline"/>
</dbReference>
<dbReference type="DrugBank" id="DB11689">
    <property type="generic name" value="Selumetinib"/>
</dbReference>
<dbReference type="DrugBank" id="DB06731">
    <property type="generic name" value="Seproxetine"/>
</dbReference>
<dbReference type="DrugBank" id="DB06739">
    <property type="generic name" value="Seratrodast"/>
</dbReference>
<dbReference type="DrugBank" id="DB01104">
    <property type="generic name" value="Sertraline"/>
</dbReference>
<dbReference type="DrugBank" id="DB00203">
    <property type="generic name" value="Sildenafil"/>
</dbReference>
<dbReference type="DrugBank" id="DB00641">
    <property type="generic name" value="Simvastatin"/>
</dbReference>
<dbReference type="DrugBank" id="DB12371">
    <property type="generic name" value="Siponimod"/>
</dbReference>
<dbReference type="DrugBank" id="DB06268">
    <property type="generic name" value="Sitaxentan"/>
</dbReference>
<dbReference type="DrugBank" id="DB00398">
    <property type="generic name" value="Sorafenib"/>
</dbReference>
<dbReference type="DrugBank" id="DB15569">
    <property type="generic name" value="Sotorasib"/>
</dbReference>
<dbReference type="DrugBank" id="DB12548">
    <property type="generic name" value="Sparsentan"/>
</dbReference>
<dbReference type="DrugBank" id="DB09118">
    <property type="generic name" value="Stiripentol"/>
</dbReference>
<dbReference type="DrugBank" id="DB06820">
    <property type="generic name" value="Sulconazole"/>
</dbReference>
<dbReference type="DrugBank" id="DB00359">
    <property type="generic name" value="Sulfadiazine"/>
</dbReference>
<dbReference type="DrugBank" id="DB06150">
    <property type="generic name" value="Sulfadimethoxine"/>
</dbReference>
<dbReference type="DrugBank" id="DB00576">
    <property type="generic name" value="Sulfamethizole"/>
</dbReference>
<dbReference type="DrugBank" id="DB01015">
    <property type="generic name" value="Sulfamethoxazole"/>
</dbReference>
<dbReference type="DrugBank" id="DB08798">
    <property type="generic name" value="Sulfamoxole"/>
</dbReference>
<dbReference type="DrugBank" id="DB06729">
    <property type="generic name" value="Sulfaphenazole"/>
</dbReference>
<dbReference type="DrugBank" id="DB00891">
    <property type="generic name" value="Sulfapyridine"/>
</dbReference>
<dbReference type="DrugBank" id="DB01138">
    <property type="generic name" value="Sulfinpyrazone"/>
</dbReference>
<dbReference type="DrugBank" id="DB00263">
    <property type="generic name" value="Sulfisoxazole"/>
</dbReference>
<dbReference type="DrugBank" id="DB00870">
    <property type="generic name" value="Suprofen"/>
</dbReference>
<dbReference type="DrugBank" id="DB00675">
    <property type="generic name" value="Tamoxifen"/>
</dbReference>
<dbReference type="DrugBank" id="DB06204">
    <property type="generic name" value="Tapentadol"/>
</dbReference>
<dbReference type="DrugBank" id="DB06083">
    <property type="generic name" value="Tapinarof"/>
</dbReference>
<dbReference type="DrugBank" id="DB12095">
    <property type="generic name" value="Telotristat ethyl"/>
</dbReference>
<dbReference type="DrugBank" id="DB00231">
    <property type="generic name" value="Temazepam"/>
</dbReference>
<dbReference type="DrugBank" id="DB00444">
    <property type="generic name" value="Teniposide"/>
</dbReference>
<dbReference type="DrugBank" id="DB00469">
    <property type="generic name" value="Tenoxicam"/>
</dbReference>
<dbReference type="DrugBank" id="DB15133">
    <property type="generic name" value="Tepotinib"/>
</dbReference>
<dbReference type="DrugBank" id="DB00857">
    <property type="generic name" value="Terbinafine"/>
</dbReference>
<dbReference type="DrugBank" id="DB00624">
    <property type="generic name" value="Testosterone"/>
</dbReference>
<dbReference type="DrugBank" id="DB13943">
    <property type="generic name" value="Testosterone cypionate"/>
</dbReference>
<dbReference type="DrugBank" id="DB13944">
    <property type="generic name" value="Testosterone enanthate"/>
</dbReference>
<dbReference type="DrugBank" id="DB13946">
    <property type="generic name" value="Testosterone undecanoate"/>
</dbReference>
<dbReference type="DrugBank" id="DB11712">
    <property type="generic name" value="Tezacaftor"/>
</dbReference>
<dbReference type="DrugBank" id="DB01041">
    <property type="generic name" value="Thalidomide"/>
</dbReference>
<dbReference type="DrugBank" id="DB01154">
    <property type="generic name" value="Thiamylal"/>
</dbReference>
<dbReference type="DrugBank" id="DB08816">
    <property type="generic name" value="Ticagrelor"/>
</dbReference>
<dbReference type="DrugBank" id="DB00208">
    <property type="generic name" value="Ticlopidine"/>
</dbReference>
<dbReference type="DrugBank" id="DB04831">
    <property type="generic name" value="Tienilic acid"/>
</dbReference>
<dbReference type="DrugBank" id="DB06137">
    <property type="generic name" value="Tirbanibulin"/>
</dbReference>
<dbReference type="DrugBank" id="DB00839">
    <property type="generic name" value="Tolazamide"/>
</dbReference>
<dbReference type="DrugBank" id="DB01124">
    <property type="generic name" value="Tolbutamide"/>
</dbReference>
<dbReference type="DrugBank" id="DB00323">
    <property type="generic name" value="Tolcapone"/>
</dbReference>
<dbReference type="DrugBank" id="DB01036">
    <property type="generic name" value="Tolterodine"/>
</dbReference>
<dbReference type="DrugBank" id="DB01685">
    <property type="generic name" value="Topiroxostat"/>
</dbReference>
<dbReference type="DrugBank" id="DB00214">
    <property type="generic name" value="Torasemide"/>
</dbReference>
<dbReference type="DrugBank" id="DB15266">
    <property type="generic name" value="Tovorafenib"/>
</dbReference>
<dbReference type="DrugBank" id="DB05109">
    <property type="generic name" value="Trabectedin"/>
</dbReference>
<dbReference type="DrugBank" id="DB07615">
    <property type="generic name" value="Tranilast"/>
</dbReference>
<dbReference type="DrugBank" id="DB00752">
    <property type="generic name" value="Tranylcypromine"/>
</dbReference>
<dbReference type="DrugBank" id="DB00374">
    <property type="generic name" value="Treprostinil"/>
</dbReference>
<dbReference type="DrugBank" id="DB00755">
    <property type="generic name" value="Tretinoin"/>
</dbReference>
<dbReference type="DrugBank" id="DB12245">
    <property type="generic name" value="Triclabendazole"/>
</dbReference>
<dbReference type="DrugBank" id="DB12808">
    <property type="generic name" value="Trifarotene"/>
</dbReference>
<dbReference type="DrugBank" id="DB00347">
    <property type="generic name" value="Trimethadione"/>
</dbReference>
<dbReference type="DrugBank" id="DB00440">
    <property type="generic name" value="Trimethoprim"/>
</dbReference>
<dbReference type="DrugBank" id="DB00726">
    <property type="generic name" value="Trimipramine"/>
</dbReference>
<dbReference type="DrugBank" id="DB00197">
    <property type="generic name" value="Troglitazone"/>
</dbReference>
<dbReference type="DrugBank" id="DB15328">
    <property type="generic name" value="Ubrogepant"/>
</dbReference>
<dbReference type="DrugBank" id="DB14989">
    <property type="generic name" value="Umbralisib"/>
</dbReference>
<dbReference type="DrugBank" id="DB13609">
    <property type="generic name" value="Umifenovir"/>
</dbReference>
<dbReference type="DrugBank" id="DB12255">
    <property type="generic name" value="Vadadustat"/>
</dbReference>
<dbReference type="DrugBank" id="DB00580">
    <property type="generic name" value="Valdecoxib"/>
</dbReference>
<dbReference type="DrugBank" id="DB00313">
    <property type="generic name" value="Valproic acid"/>
</dbReference>
<dbReference type="DrugBank" id="DB00177">
    <property type="generic name" value="Valsartan"/>
</dbReference>
<dbReference type="DrugBank" id="DB00862">
    <property type="generic name" value="Vardenafil"/>
</dbReference>
<dbReference type="DrugBank" id="DB08881">
    <property type="generic name" value="Vemurafenib"/>
</dbReference>
<dbReference type="DrugBank" id="DB00285">
    <property type="generic name" value="Venlafaxine"/>
</dbReference>
<dbReference type="DrugBank" id="DB00661">
    <property type="generic name" value="Verapamil"/>
</dbReference>
<dbReference type="DrugBank" id="DB06652">
    <property type="generic name" value="Vicriviroc"/>
</dbReference>
<dbReference type="DrugBank" id="DB01080">
    <property type="generic name" value="Vigabatrin"/>
</dbReference>
<dbReference type="DrugBank" id="DB08828">
    <property type="generic name" value="Vismodegib"/>
</dbReference>
<dbReference type="DrugBank" id="DB11739">
    <property type="generic name" value="Vonoprazan"/>
</dbReference>
<dbReference type="DrugBank" id="DB17097">
    <property type="generic name" value="Vorasidenib"/>
</dbReference>
<dbReference type="DrugBank" id="DB00582">
    <property type="generic name" value="Voriconazole"/>
</dbReference>
<dbReference type="DrugBank" id="DB09068">
    <property type="generic name" value="Vortioxetine"/>
</dbReference>
<dbReference type="DrugBank" id="DB14975">
    <property type="generic name" value="Voxelotor"/>
</dbReference>
<dbReference type="DrugBank" id="DB00682">
    <property type="generic name" value="Warfarin"/>
</dbReference>
<dbReference type="DrugBank" id="DB15357">
    <property type="generic name" value="Xanomeline"/>
</dbReference>
<dbReference type="DrugBank" id="DB04898">
    <property type="generic name" value="Ximelagatran"/>
</dbReference>
<dbReference type="DrugBank" id="DB00549">
    <property type="generic name" value="Zafirlukast"/>
</dbReference>
<dbReference type="DrugBank" id="DB06737">
    <property type="generic name" value="Zaltoprofen"/>
</dbReference>
<dbReference type="DrugBank" id="DB00495">
    <property type="generic name" value="Zidovudine"/>
</dbReference>
<dbReference type="DrugBank" id="DB00744">
    <property type="generic name" value="Zileuton"/>
</dbReference>
<dbReference type="DrugBank" id="DB00425">
    <property type="generic name" value="Zolpidem"/>
</dbReference>
<dbReference type="DrugBank" id="DB01198">
    <property type="generic name" value="Zopiclone"/>
</dbReference>
<dbReference type="DrugBank" id="DB09120">
    <property type="generic name" value="Zucapsaicin"/>
</dbReference>
<dbReference type="DrugCentral" id="P11712"/>
<dbReference type="GuidetoPHARMACOLOGY" id="1326"/>
<dbReference type="SwissLipids" id="SLP:000001203"/>
<dbReference type="GlyGen" id="P11712">
    <property type="glycosylation" value="1 site"/>
</dbReference>
<dbReference type="iPTMnet" id="P11712"/>
<dbReference type="PhosphoSitePlus" id="P11712"/>
<dbReference type="BioMuta" id="CYP2C9"/>
<dbReference type="DMDM" id="6686268"/>
<dbReference type="jPOST" id="P11712"/>
<dbReference type="MassIVE" id="P11712"/>
<dbReference type="PaxDb" id="9606-ENSP00000260682"/>
<dbReference type="PeptideAtlas" id="P11712"/>
<dbReference type="ProteomicsDB" id="52801">
    <molecule id="P11712-1"/>
</dbReference>
<dbReference type="Antibodypedia" id="4244">
    <property type="antibodies" value="307 antibodies from 33 providers"/>
</dbReference>
<dbReference type="DNASU" id="1559"/>
<dbReference type="Ensembl" id="ENST00000260682.8">
    <molecule id="P11712-1"/>
    <property type="protein sequence ID" value="ENSP00000260682.6"/>
    <property type="gene ID" value="ENSG00000138109.11"/>
</dbReference>
<dbReference type="Ensembl" id="ENST00000461906.1">
    <molecule id="P11712-2"/>
    <property type="protein sequence ID" value="ENSP00000495649.1"/>
    <property type="gene ID" value="ENSG00000138109.11"/>
</dbReference>
<dbReference type="GeneID" id="1559"/>
<dbReference type="KEGG" id="hsa:1559"/>
<dbReference type="MANE-Select" id="ENST00000260682.8">
    <property type="protein sequence ID" value="ENSP00000260682.6"/>
    <property type="RefSeq nucleotide sequence ID" value="NM_000771.4"/>
    <property type="RefSeq protein sequence ID" value="NP_000762.2"/>
</dbReference>
<dbReference type="AGR" id="HGNC:2623"/>
<dbReference type="CTD" id="1559"/>
<dbReference type="DisGeNET" id="1559"/>
<dbReference type="GeneCards" id="CYP2C9"/>
<dbReference type="HGNC" id="HGNC:2623">
    <property type="gene designation" value="CYP2C9"/>
</dbReference>
<dbReference type="HPA" id="ENSG00000138109">
    <property type="expression patterns" value="Tissue enriched (liver)"/>
</dbReference>
<dbReference type="MalaCards" id="CYP2C9"/>
<dbReference type="MIM" id="601130">
    <property type="type" value="gene"/>
</dbReference>
<dbReference type="neXtProt" id="NX_P11712"/>
<dbReference type="OpenTargets" id="ENSG00000138109"/>
<dbReference type="PharmGKB" id="PA126"/>
<dbReference type="VEuPathDB" id="HostDB:ENSG00000138109"/>
<dbReference type="eggNOG" id="KOG0156">
    <property type="taxonomic scope" value="Eukaryota"/>
</dbReference>
<dbReference type="GeneTree" id="ENSGT00940000163209"/>
<dbReference type="HOGENOM" id="CLU_001570_22_3_1"/>
<dbReference type="InParanoid" id="P11712"/>
<dbReference type="OMA" id="FHGLGNN"/>
<dbReference type="OrthoDB" id="2789670at2759"/>
<dbReference type="PAN-GO" id="P11712">
    <property type="GO annotations" value="8 GO annotations based on evolutionary models"/>
</dbReference>
<dbReference type="PhylomeDB" id="P11712"/>
<dbReference type="TreeFam" id="TF352043"/>
<dbReference type="BioCyc" id="MetaCyc:HS06458-MONOMER"/>
<dbReference type="BRENDA" id="1.14.99.38">
    <property type="organism ID" value="2681"/>
</dbReference>
<dbReference type="PathwayCommons" id="P11712"/>
<dbReference type="Reactome" id="R-HSA-211981">
    <property type="pathway name" value="Xenobiotics"/>
</dbReference>
<dbReference type="Reactome" id="R-HSA-211999">
    <property type="pathway name" value="CYP2E1 reactions"/>
</dbReference>
<dbReference type="Reactome" id="R-HSA-2142670">
    <property type="pathway name" value="Synthesis of epoxy (EET) and dihydroxyeicosatrienoic acids (DHET)"/>
</dbReference>
<dbReference type="Reactome" id="R-HSA-2142816">
    <property type="pathway name" value="Synthesis of (16-20)-hydroxyeicosatetraenoic acids (HETE)"/>
</dbReference>
<dbReference type="Reactome" id="R-HSA-9027307">
    <property type="pathway name" value="Biosynthesis of maresin-like SPMs"/>
</dbReference>
<dbReference type="Reactome" id="R-HSA-9749641">
    <property type="pathway name" value="Aspirin ADME"/>
</dbReference>
<dbReference type="SABIO-RK" id="P11712"/>
<dbReference type="SignaLink" id="P11712"/>
<dbReference type="SIGNOR" id="P11712"/>
<dbReference type="UniPathway" id="UPA00296"/>
<dbReference type="UniPathway" id="UPA00383"/>
<dbReference type="UniPathway" id="UPA00987"/>
<dbReference type="BioGRID-ORCS" id="1559">
    <property type="hits" value="15 hits in 1110 CRISPR screens"/>
</dbReference>
<dbReference type="ChiTaRS" id="CYP2C9">
    <property type="organism name" value="human"/>
</dbReference>
<dbReference type="EvolutionaryTrace" id="P11712"/>
<dbReference type="GeneWiki" id="CYP2C9"/>
<dbReference type="GenomeRNAi" id="1559"/>
<dbReference type="Pharos" id="P11712">
    <property type="development level" value="Tchem"/>
</dbReference>
<dbReference type="PRO" id="PR:P11712"/>
<dbReference type="Proteomes" id="UP000005640">
    <property type="component" value="Chromosome 10"/>
</dbReference>
<dbReference type="RNAct" id="P11712">
    <property type="molecule type" value="protein"/>
</dbReference>
<dbReference type="Bgee" id="ENSG00000138109">
    <property type="expression patterns" value="Expressed in right lobe of liver and 119 other cell types or tissues"/>
</dbReference>
<dbReference type="ExpressionAtlas" id="P11712">
    <property type="expression patterns" value="baseline and differential"/>
</dbReference>
<dbReference type="GO" id="GO:0005737">
    <property type="term" value="C:cytoplasm"/>
    <property type="evidence" value="ECO:0000318"/>
    <property type="project" value="GO_Central"/>
</dbReference>
<dbReference type="GO" id="GO:0005789">
    <property type="term" value="C:endoplasmic reticulum membrane"/>
    <property type="evidence" value="ECO:0000304"/>
    <property type="project" value="Reactome"/>
</dbReference>
<dbReference type="GO" id="GO:0043231">
    <property type="term" value="C:intracellular membrane-bounded organelle"/>
    <property type="evidence" value="ECO:0000314"/>
    <property type="project" value="HPA"/>
</dbReference>
<dbReference type="GO" id="GO:0005886">
    <property type="term" value="C:plasma membrane"/>
    <property type="evidence" value="ECO:0000314"/>
    <property type="project" value="HPA"/>
</dbReference>
<dbReference type="GO" id="GO:0052741">
    <property type="term" value="F:(R)-limonene 6-monooxygenase activity"/>
    <property type="evidence" value="ECO:0007669"/>
    <property type="project" value="UniProtKB-EC"/>
</dbReference>
<dbReference type="GO" id="GO:0018675">
    <property type="term" value="F:(S)-limonene 6-monooxygenase activity"/>
    <property type="evidence" value="ECO:0007669"/>
    <property type="project" value="UniProtKB-EC"/>
</dbReference>
<dbReference type="GO" id="GO:0018676">
    <property type="term" value="F:(S)-limonene 7-monooxygenase activity"/>
    <property type="evidence" value="ECO:0007669"/>
    <property type="project" value="UniProtKB-EC"/>
</dbReference>
<dbReference type="GO" id="GO:0008405">
    <property type="term" value="F:arachidonate 11,12-epoxygenase activity"/>
    <property type="evidence" value="ECO:0007669"/>
    <property type="project" value="RHEA"/>
</dbReference>
<dbReference type="GO" id="GO:0008404">
    <property type="term" value="F:arachidonate 14,15-epoxygenase activity"/>
    <property type="evidence" value="ECO:0007669"/>
    <property type="project" value="RHEA"/>
</dbReference>
<dbReference type="GO" id="GO:0008392">
    <property type="term" value="F:arachidonate epoxygenase activity"/>
    <property type="evidence" value="ECO:0000314"/>
    <property type="project" value="UniProtKB"/>
</dbReference>
<dbReference type="GO" id="GO:0034875">
    <property type="term" value="F:caffeine oxidase activity"/>
    <property type="evidence" value="ECO:0000314"/>
    <property type="project" value="BHF-UCL"/>
</dbReference>
<dbReference type="GO" id="GO:0101021">
    <property type="term" value="F:estrogen 2-hydroxylase activity"/>
    <property type="evidence" value="ECO:0007669"/>
    <property type="project" value="RHEA"/>
</dbReference>
<dbReference type="GO" id="GO:0020037">
    <property type="term" value="F:heme binding"/>
    <property type="evidence" value="ECO:0000318"/>
    <property type="project" value="GO_Central"/>
</dbReference>
<dbReference type="GO" id="GO:0005506">
    <property type="term" value="F:iron ion binding"/>
    <property type="evidence" value="ECO:0007669"/>
    <property type="project" value="InterPro"/>
</dbReference>
<dbReference type="GO" id="GO:0004497">
    <property type="term" value="F:monooxygenase activity"/>
    <property type="evidence" value="ECO:0000314"/>
    <property type="project" value="UniProtKB"/>
</dbReference>
<dbReference type="GO" id="GO:0016491">
    <property type="term" value="F:oxidoreductase activity"/>
    <property type="evidence" value="ECO:0000314"/>
    <property type="project" value="BHF-UCL"/>
</dbReference>
<dbReference type="GO" id="GO:0016712">
    <property type="term" value="F:oxidoreductase activity, acting on paired donors, with incorporation or reduction of molecular oxygen, reduced flavin or flavoprotein as one donor, and incorporation of one atom of oxygen"/>
    <property type="evidence" value="ECO:0000318"/>
    <property type="project" value="GO_Central"/>
</dbReference>
<dbReference type="GO" id="GO:0008395">
    <property type="term" value="F:steroid hydroxylase activity"/>
    <property type="evidence" value="ECO:0000315"/>
    <property type="project" value="BHF-UCL"/>
</dbReference>
<dbReference type="GO" id="GO:0043603">
    <property type="term" value="P:amide metabolic process"/>
    <property type="evidence" value="ECO:0000314"/>
    <property type="project" value="BHF-UCL"/>
</dbReference>
<dbReference type="GO" id="GO:0008203">
    <property type="term" value="P:cholesterol metabolic process"/>
    <property type="evidence" value="ECO:0007669"/>
    <property type="project" value="UniProtKB-UniPathway"/>
</dbReference>
<dbReference type="GO" id="GO:0019373">
    <property type="term" value="P:epoxygenase P450 pathway"/>
    <property type="evidence" value="ECO:0000314"/>
    <property type="project" value="UniProtKB"/>
</dbReference>
<dbReference type="GO" id="GO:0008210">
    <property type="term" value="P:estrogen metabolic process"/>
    <property type="evidence" value="ECO:0000314"/>
    <property type="project" value="UniProtKB"/>
</dbReference>
<dbReference type="GO" id="GO:0046456">
    <property type="term" value="P:icosanoid biosynthetic process"/>
    <property type="evidence" value="ECO:0000314"/>
    <property type="project" value="UniProtKB"/>
</dbReference>
<dbReference type="GO" id="GO:0042759">
    <property type="term" value="P:long-chain fatty acid biosynthetic process"/>
    <property type="evidence" value="ECO:0000304"/>
    <property type="project" value="Reactome"/>
</dbReference>
<dbReference type="GO" id="GO:0032787">
    <property type="term" value="P:monocarboxylic acid metabolic process"/>
    <property type="evidence" value="ECO:0000314"/>
    <property type="project" value="BHF-UCL"/>
</dbReference>
<dbReference type="GO" id="GO:0016098">
    <property type="term" value="P:monoterpenoid metabolic process"/>
    <property type="evidence" value="ECO:0000314"/>
    <property type="project" value="BHF-UCL"/>
</dbReference>
<dbReference type="GO" id="GO:0097267">
    <property type="term" value="P:omega-hydroxylase P450 pathway"/>
    <property type="evidence" value="ECO:0000304"/>
    <property type="project" value="Reactome"/>
</dbReference>
<dbReference type="GO" id="GO:0006082">
    <property type="term" value="P:organic acid metabolic process"/>
    <property type="evidence" value="ECO:0000318"/>
    <property type="project" value="GO_Central"/>
</dbReference>
<dbReference type="GO" id="GO:0090346">
    <property type="term" value="P:organofluorine metabolic process"/>
    <property type="evidence" value="ECO:0000314"/>
    <property type="project" value="BHF-UCL"/>
</dbReference>
<dbReference type="GO" id="GO:0070989">
    <property type="term" value="P:oxidative demethylation"/>
    <property type="evidence" value="ECO:0000314"/>
    <property type="project" value="BHF-UCL"/>
</dbReference>
<dbReference type="GO" id="GO:0008202">
    <property type="term" value="P:steroid metabolic process"/>
    <property type="evidence" value="ECO:0000315"/>
    <property type="project" value="BHF-UCL"/>
</dbReference>
<dbReference type="GO" id="GO:0019627">
    <property type="term" value="P:urea metabolic process"/>
    <property type="evidence" value="ECO:0000314"/>
    <property type="project" value="BHF-UCL"/>
</dbReference>
<dbReference type="GO" id="GO:0042178">
    <property type="term" value="P:xenobiotic catabolic process"/>
    <property type="evidence" value="ECO:0000314"/>
    <property type="project" value="BHF-UCL"/>
</dbReference>
<dbReference type="GO" id="GO:0006805">
    <property type="term" value="P:xenobiotic metabolic process"/>
    <property type="evidence" value="ECO:0000314"/>
    <property type="project" value="BHF-UCL"/>
</dbReference>
<dbReference type="CDD" id="cd20665">
    <property type="entry name" value="CYP2C-like"/>
    <property type="match status" value="1"/>
</dbReference>
<dbReference type="FunFam" id="1.10.630.10:FF:000299">
    <property type="entry name" value="Cytochrome P450 2C9"/>
    <property type="match status" value="1"/>
</dbReference>
<dbReference type="Gene3D" id="1.10.630.10">
    <property type="entry name" value="Cytochrome P450"/>
    <property type="match status" value="1"/>
</dbReference>
<dbReference type="InterPro" id="IPR001128">
    <property type="entry name" value="Cyt_P450"/>
</dbReference>
<dbReference type="InterPro" id="IPR017972">
    <property type="entry name" value="Cyt_P450_CS"/>
</dbReference>
<dbReference type="InterPro" id="IPR002401">
    <property type="entry name" value="Cyt_P450_E_grp-I"/>
</dbReference>
<dbReference type="InterPro" id="IPR036396">
    <property type="entry name" value="Cyt_P450_sf"/>
</dbReference>
<dbReference type="InterPro" id="IPR050182">
    <property type="entry name" value="Cytochrome_P450_fam2"/>
</dbReference>
<dbReference type="PANTHER" id="PTHR24300:SF400">
    <property type="entry name" value="CYTOCHROME P450 2C9"/>
    <property type="match status" value="1"/>
</dbReference>
<dbReference type="PANTHER" id="PTHR24300">
    <property type="entry name" value="CYTOCHROME P450 508A4-RELATED"/>
    <property type="match status" value="1"/>
</dbReference>
<dbReference type="Pfam" id="PF00067">
    <property type="entry name" value="p450"/>
    <property type="match status" value="1"/>
</dbReference>
<dbReference type="PRINTS" id="PR00463">
    <property type="entry name" value="EP450I"/>
</dbReference>
<dbReference type="PRINTS" id="PR00385">
    <property type="entry name" value="P450"/>
</dbReference>
<dbReference type="SUPFAM" id="SSF48264">
    <property type="entry name" value="Cytochrome P450"/>
    <property type="match status" value="1"/>
</dbReference>
<dbReference type="PROSITE" id="PS00086">
    <property type="entry name" value="CYTOCHROME_P450"/>
    <property type="match status" value="1"/>
</dbReference>
<organism>
    <name type="scientific">Homo sapiens</name>
    <name type="common">Human</name>
    <dbReference type="NCBI Taxonomy" id="9606"/>
    <lineage>
        <taxon>Eukaryota</taxon>
        <taxon>Metazoa</taxon>
        <taxon>Chordata</taxon>
        <taxon>Craniata</taxon>
        <taxon>Vertebrata</taxon>
        <taxon>Euteleostomi</taxon>
        <taxon>Mammalia</taxon>
        <taxon>Eutheria</taxon>
        <taxon>Euarchontoglires</taxon>
        <taxon>Primates</taxon>
        <taxon>Haplorrhini</taxon>
        <taxon>Catarrhini</taxon>
        <taxon>Hominidae</taxon>
        <taxon>Homo</taxon>
    </lineage>
</organism>
<accession>P11712</accession>
<accession>P11713</accession>
<accession>Q16756</accession>
<accession>Q16872</accession>
<accession>Q5VX92</accession>
<accession>Q6IRV8</accession>
<accession>Q8WW80</accession>
<sequence>MDSLVVLVLCLSCLLLLSLWRQSSGRGKLPPGPTPLPVIGNILQIGIKDISKSLTNLSKVYGPVFTLYFGLKPIVVLHGYEAVKEALIDLGEEFSGRGIFPLAERANRGFGIVFSNGKKWKEIRRFSLMTLRNFGMGKRSIEDRVQEEARCLVEELRKTKASPCDPTFILGCAPCNVICSIIFHKRFDYKDQQFLNLMEKLNENIKILSSPWIQICNNFSPIIDYFPGTHNKLLKNVAFMKSYILEKVKEHQESMDMNNPQDFIDCFLMKMEKEKHNQPSEFTIESLENTAVDLFGAGTETTSTTLRYALLLLLKHPEVTAKVQEEIERVIGRNRSPCMQDRSHMPYTDAVVHEVQRYIDLLPTSLPHAVTCDIKFRNYLIPKGTTILISLTSVLHDNKEFPNPEMFDPHHFLDEGGNFKKSKYFMPFSAGKRICVGEALAGMELFLFLTSILQNFNLKSLVDPKNLDTTPVVNGFASVPPFYQLCFIPV</sequence>
<evidence type="ECO:0000269" key="1">
    <source>
    </source>
</evidence>
<evidence type="ECO:0000269" key="2">
    <source>
    </source>
</evidence>
<evidence type="ECO:0000269" key="3">
    <source>
    </source>
</evidence>
<evidence type="ECO:0000269" key="4">
    <source>
    </source>
</evidence>
<evidence type="ECO:0000269" key="5">
    <source>
    </source>
</evidence>
<evidence type="ECO:0000269" key="6">
    <source>
    </source>
</evidence>
<evidence type="ECO:0000269" key="7">
    <source>
    </source>
</evidence>
<evidence type="ECO:0000269" key="8">
    <source>
    </source>
</evidence>
<evidence type="ECO:0000269" key="9">
    <source>
    </source>
</evidence>
<evidence type="ECO:0000269" key="10">
    <source>
    </source>
</evidence>
<evidence type="ECO:0000269" key="11">
    <source>
    </source>
</evidence>
<evidence type="ECO:0000269" key="12">
    <source>
    </source>
</evidence>
<evidence type="ECO:0000269" key="13">
    <source>
    </source>
</evidence>
<evidence type="ECO:0000269" key="14">
    <source>
    </source>
</evidence>
<evidence type="ECO:0000269" key="15">
    <source>
    </source>
</evidence>
<evidence type="ECO:0000269" key="16">
    <source>
    </source>
</evidence>
<evidence type="ECO:0000269" key="17">
    <source>
    </source>
</evidence>
<evidence type="ECO:0000269" key="18">
    <source>
    </source>
</evidence>
<evidence type="ECO:0000269" key="19">
    <source>
    </source>
</evidence>
<evidence type="ECO:0000269" key="20">
    <source>
    </source>
</evidence>
<evidence type="ECO:0000269" key="21">
    <source>
    </source>
</evidence>
<evidence type="ECO:0000269" key="22">
    <source>
    </source>
</evidence>
<evidence type="ECO:0000269" key="23">
    <source>
    </source>
</evidence>
<evidence type="ECO:0000269" key="24">
    <source>
    </source>
</evidence>
<evidence type="ECO:0000269" key="25">
    <source ref="3"/>
</evidence>
<evidence type="ECO:0000303" key="26">
    <source>
    </source>
</evidence>
<evidence type="ECO:0000303" key="27">
    <source>
    </source>
</evidence>
<evidence type="ECO:0000303" key="28">
    <source>
    </source>
</evidence>
<evidence type="ECO:0000303" key="29">
    <source>
    </source>
</evidence>
<evidence type="ECO:0000303" key="30">
    <source>
    </source>
</evidence>
<evidence type="ECO:0000305" key="31"/>
<evidence type="ECO:0000305" key="32">
    <source>
    </source>
</evidence>
<evidence type="ECO:0000305" key="33">
    <source>
    </source>
</evidence>
<evidence type="ECO:0000305" key="34">
    <source>
    </source>
</evidence>
<evidence type="ECO:0000305" key="35">
    <source>
    </source>
</evidence>
<evidence type="ECO:0000305" key="36">
    <source>
    </source>
</evidence>
<evidence type="ECO:0000305" key="37">
    <source>
    </source>
</evidence>
<evidence type="ECO:0000305" key="38">
    <source>
    </source>
</evidence>
<evidence type="ECO:0000312" key="39">
    <source>
        <dbReference type="HGNC" id="HGNC:2623"/>
    </source>
</evidence>
<evidence type="ECO:0007829" key="40">
    <source>
        <dbReference type="PDB" id="1OG5"/>
    </source>
</evidence>
<evidence type="ECO:0007829" key="41">
    <source>
        <dbReference type="PDB" id="1R9O"/>
    </source>
</evidence>
<evidence type="ECO:0007829" key="42">
    <source>
        <dbReference type="PDB" id="5A5I"/>
    </source>
</evidence>
<evidence type="ECO:0007829" key="43">
    <source>
        <dbReference type="PDB" id="5A5J"/>
    </source>
</evidence>
<evidence type="ECO:0007829" key="44">
    <source>
        <dbReference type="PDB" id="5W0C"/>
    </source>
</evidence>
<evidence type="ECO:0007829" key="45">
    <source>
        <dbReference type="PDB" id="5X23"/>
    </source>
</evidence>
<proteinExistence type="evidence at protein level"/>
<feature type="chain" id="PRO_0000051700" description="Cytochrome P450 2C9">
    <location>
        <begin position="1"/>
        <end position="490"/>
    </location>
</feature>
<feature type="binding site" description="axial binding residue">
    <location>
        <position position="435"/>
    </location>
    <ligand>
        <name>heme</name>
        <dbReference type="ChEBI" id="CHEBI:30413"/>
    </ligand>
    <ligandPart>
        <name>Fe</name>
        <dbReference type="ChEBI" id="CHEBI:18248"/>
    </ligandPart>
</feature>
<feature type="splice variant" id="VSP_055573" description="In isoform 2." evidence="27">
    <original>AS</original>
    <variation>GG</variation>
    <location>
        <begin position="161"/>
        <end position="162"/>
    </location>
</feature>
<feature type="splice variant" id="VSP_055574" description="In isoform 2." evidence="27">
    <location>
        <begin position="163"/>
        <end position="490"/>
    </location>
</feature>
<feature type="sequence variant" id="VAR_018862" description="In allele CYP2C9*7; dbSNP:rs67807361.">
    <original>L</original>
    <variation>I</variation>
    <location>
        <position position="19"/>
    </location>
</feature>
<feature type="sequence variant" id="VAR_075286" description="In allele CYP2C9*35; dbSNP:rs72558189." evidence="13">
    <original>R</original>
    <variation>H</variation>
    <location>
        <position position="125"/>
    </location>
</feature>
<feature type="sequence variant" id="VAR_075287" description="In allele CYP2C9*14; dbSNP:rs72558189." evidence="10">
    <original>R</original>
    <variation>L</variation>
    <location>
        <position position="125"/>
    </location>
</feature>
<feature type="sequence variant" id="VAR_008343" description="In allele CYP2C9*2; dbSNP:rs1799853." evidence="6 7 15 19 21 22 25">
    <original>R</original>
    <variation>C</variation>
    <location>
        <position position="144"/>
    </location>
</feature>
<feature type="sequence variant" id="VAR_018863" description="In allele CYP2C9*8; dbSNP:rs7900194." evidence="6 25">
    <original>R</original>
    <variation>H</variation>
    <location>
        <position position="150"/>
    </location>
</feature>
<feature type="sequence variant" id="VAR_075288" description="In allele CYP2C9*57." evidence="12">
    <original>N</original>
    <variation>H</variation>
    <location>
        <position position="204"/>
    </location>
</feature>
<feature type="sequence variant" id="VAR_018864" description="In allele CYP2C9*9; dbSNP:rs2256871." evidence="6 25">
    <original>H</original>
    <variation>R</variation>
    <location>
        <position position="251"/>
    </location>
</feature>
<feature type="sequence variant" id="VAR_018865" description="In allele CYP2C9*10; dbSNP:rs9332130." evidence="25">
    <original>E</original>
    <variation>G</variation>
    <location>
        <position position="272"/>
    </location>
</feature>
<feature type="sequence variant" id="VAR_018866" description="In allele CYP2C9*11; dbSNP:rs28371685." evidence="3 6">
    <original>R</original>
    <variation>W</variation>
    <location>
        <position position="335"/>
    </location>
</feature>
<feature type="sequence variant" id="VAR_008344" description="In dbSNP:rs1057909." evidence="16 18 22">
    <original>Y</original>
    <variation>C</variation>
    <location>
        <position position="358"/>
    </location>
</feature>
<feature type="sequence variant" id="VAR_008345" description="In allele CYP2C9*3; responsible for the tolbutamide poor metabolizer phenotype; dbSNP:rs1057910." evidence="6 21 22 25">
    <original>I</original>
    <variation>L</variation>
    <location>
        <position position="359"/>
    </location>
</feature>
<feature type="sequence variant" id="VAR_013515" description="In allele CYP2C9*4; dbSNP:rs56165452." evidence="1">
    <original>I</original>
    <variation>T</variation>
    <location>
        <position position="359"/>
    </location>
</feature>
<feature type="sequence variant" id="VAR_013516" description="In allele CYP2C9*5; increases the K(m) value for substrates tested; dbSNP:rs28371686." evidence="2 6">
    <original>D</original>
    <variation>E</variation>
    <location>
        <position position="360"/>
    </location>
</feature>
<feature type="sequence variant" id="VAR_024717" description="In dbSNP:rs28371687." evidence="6">
    <original>L</original>
    <variation>P</variation>
    <location>
        <position position="413"/>
    </location>
</feature>
<feature type="sequence variant" id="VAR_008346" evidence="16 18 22">
    <original>G</original>
    <variation>D</variation>
    <location>
        <position position="417"/>
    </location>
</feature>
<feature type="sequence variant" id="VAR_075289" description="In allele CYP2C9*59; produces warfarin hypersensitivity; increases affinity but highly decreases enzymatic activity for tolbutamide; no effect on affinity but decreases enzymatic activity for diclofenac; decreases affinity and highly decreases enzymatic activity for losartan." evidence="14">
    <original>I</original>
    <variation>F</variation>
    <location>
        <position position="434"/>
    </location>
</feature>
<feature type="sequence variant" id="VAR_018867" description="In allele CYP2C9*12; dbSNP:rs9332239." evidence="25">
    <original>P</original>
    <variation>S</variation>
    <location>
        <position position="489"/>
    </location>
</feature>
<feature type="sequence conflict" description="In Ref. 2; no nucleotide entry." evidence="31" ref="2">
    <original>L</original>
    <variation>I</variation>
    <location>
        <position position="4"/>
    </location>
</feature>
<feature type="sequence conflict" description="In Ref. 2; no nucleotide entry." evidence="31" ref="2">
    <original>V</original>
    <variation>S</variation>
    <location>
        <position position="6"/>
    </location>
</feature>
<feature type="sequence conflict" description="In Ref. 11; AAB23864." evidence="31" ref="11">
    <original>L</original>
    <variation>M</variation>
    <location>
        <position position="14"/>
    </location>
</feature>
<feature type="sequence conflict" description="In Ref. 1; no nucleotide entry." evidence="31" ref="1">
    <original>C</original>
    <variation>Y</variation>
    <location>
        <position position="175"/>
    </location>
</feature>
<feature type="sequence conflict" description="In Ref. 1; no nucleotide entry." evidence="31" ref="1">
    <original>F</original>
    <variation>L</variation>
    <location>
        <position position="239"/>
    </location>
</feature>
<feature type="strand" evidence="41">
    <location>
        <begin position="33"/>
        <end position="35"/>
    </location>
</feature>
<feature type="turn" evidence="45">
    <location>
        <begin position="37"/>
        <end position="39"/>
    </location>
</feature>
<feature type="helix" evidence="45">
    <location>
        <begin position="42"/>
        <end position="44"/>
    </location>
</feature>
<feature type="helix" evidence="41">
    <location>
        <begin position="47"/>
        <end position="61"/>
    </location>
</feature>
<feature type="strand" evidence="41">
    <location>
        <begin position="63"/>
        <end position="71"/>
    </location>
</feature>
<feature type="strand" evidence="41">
    <location>
        <begin position="73"/>
        <end position="77"/>
    </location>
</feature>
<feature type="helix" evidence="41">
    <location>
        <begin position="80"/>
        <end position="87"/>
    </location>
</feature>
<feature type="turn" evidence="41">
    <location>
        <begin position="88"/>
        <end position="94"/>
    </location>
</feature>
<feature type="strand" evidence="43">
    <location>
        <begin position="95"/>
        <end position="97"/>
    </location>
</feature>
<feature type="turn" evidence="41">
    <location>
        <begin position="105"/>
        <end position="107"/>
    </location>
</feature>
<feature type="strand" evidence="42">
    <location>
        <begin position="111"/>
        <end position="114"/>
    </location>
</feature>
<feature type="helix" evidence="41">
    <location>
        <begin position="117"/>
        <end position="131"/>
    </location>
</feature>
<feature type="strand" evidence="41">
    <location>
        <begin position="134"/>
        <end position="136"/>
    </location>
</feature>
<feature type="strand" evidence="45">
    <location>
        <begin position="137"/>
        <end position="139"/>
    </location>
</feature>
<feature type="helix" evidence="41">
    <location>
        <begin position="141"/>
        <end position="157"/>
    </location>
</feature>
<feature type="turn" evidence="41">
    <location>
        <begin position="158"/>
        <end position="161"/>
    </location>
</feature>
<feature type="helix" evidence="41">
    <location>
        <begin position="167"/>
        <end position="183"/>
    </location>
</feature>
<feature type="helix" evidence="41">
    <location>
        <begin position="192"/>
        <end position="208"/>
    </location>
</feature>
<feature type="helix" evidence="45">
    <location>
        <begin position="211"/>
        <end position="214"/>
    </location>
</feature>
<feature type="helix" evidence="45">
    <location>
        <begin position="216"/>
        <end position="218"/>
    </location>
</feature>
<feature type="helix" evidence="44">
    <location>
        <begin position="222"/>
        <end position="224"/>
    </location>
</feature>
<feature type="turn" evidence="43">
    <location>
        <begin position="227"/>
        <end position="229"/>
    </location>
</feature>
<feature type="helix" evidence="41">
    <location>
        <begin position="230"/>
        <end position="253"/>
    </location>
</feature>
<feature type="helix" evidence="41">
    <location>
        <begin position="263"/>
        <end position="274"/>
    </location>
</feature>
<feature type="strand" evidence="45">
    <location>
        <begin position="275"/>
        <end position="277"/>
    </location>
</feature>
<feature type="helix" evidence="41">
    <location>
        <begin position="284"/>
        <end position="315"/>
    </location>
</feature>
<feature type="helix" evidence="41">
    <location>
        <begin position="317"/>
        <end position="330"/>
    </location>
</feature>
<feature type="strand" evidence="41">
    <location>
        <begin position="333"/>
        <end position="335"/>
    </location>
</feature>
<feature type="helix" evidence="41">
    <location>
        <begin position="339"/>
        <end position="344"/>
    </location>
</feature>
<feature type="helix" evidence="41">
    <location>
        <begin position="346"/>
        <end position="359"/>
    </location>
</feature>
<feature type="strand" evidence="41">
    <location>
        <begin position="374"/>
        <end position="376"/>
    </location>
</feature>
<feature type="strand" evidence="41">
    <location>
        <begin position="379"/>
        <end position="381"/>
    </location>
</feature>
<feature type="strand" evidence="41">
    <location>
        <begin position="386"/>
        <end position="389"/>
    </location>
</feature>
<feature type="helix" evidence="41">
    <location>
        <begin position="392"/>
        <end position="395"/>
    </location>
</feature>
<feature type="turn" evidence="41">
    <location>
        <begin position="398"/>
        <end position="400"/>
    </location>
</feature>
<feature type="strand" evidence="41">
    <location>
        <begin position="401"/>
        <end position="403"/>
    </location>
</feature>
<feature type="helix" evidence="41">
    <location>
        <begin position="409"/>
        <end position="412"/>
    </location>
</feature>
<feature type="strand" evidence="40">
    <location>
        <begin position="415"/>
        <end position="417"/>
    </location>
</feature>
<feature type="helix" evidence="41">
    <location>
        <begin position="431"/>
        <end position="433"/>
    </location>
</feature>
<feature type="helix" evidence="41">
    <location>
        <begin position="438"/>
        <end position="455"/>
    </location>
</feature>
<feature type="strand" evidence="41">
    <location>
        <begin position="456"/>
        <end position="462"/>
    </location>
</feature>
<feature type="helix" evidence="41">
    <location>
        <begin position="464"/>
        <end position="466"/>
    </location>
</feature>
<feature type="strand" evidence="41">
    <location>
        <begin position="475"/>
        <end position="477"/>
    </location>
</feature>
<feature type="strand" evidence="41">
    <location>
        <begin position="485"/>
        <end position="489"/>
    </location>
</feature>
<gene>
    <name evidence="26 39" type="primary">CYP2C9</name>
    <name evidence="29" type="synonym">CYP2C10</name>
</gene>